<comment type="function">
    <text evidence="10">This protein is one of the early assembly proteins of the 50S ribosomal subunit, although it is not seen to bind rRNA by itself. It is important during the early stages of 50S assembly.</text>
</comment>
<comment type="subunit">
    <text evidence="2 3 4 5 6 7 8 9 11">Part of the 50S ribosomal subunit.</text>
</comment>
<comment type="mass spectrometry" mass="16018.0" method="MALDI" evidence="2"/>
<comment type="similarity">
    <text evidence="1">Belongs to the universal ribosomal protein uL13 family.</text>
</comment>
<gene>
    <name evidence="1" type="primary">rplM</name>
    <name type="ordered locus">b3231</name>
    <name type="ordered locus">JW3200</name>
</gene>
<reference key="1">
    <citation type="journal article" date="1978" name="FEBS Lett.">
        <title>The primary structure of protein L13 from the large subunit of Escherichia coli ribosomes.</title>
        <authorList>
            <person name="Mende L."/>
        </authorList>
    </citation>
    <scope>PROTEIN SEQUENCE</scope>
    <scope>SUBUNIT</scope>
    <source>
        <strain>K</strain>
    </source>
</reference>
<reference key="2">
    <citation type="journal article" date="1985" name="Mol. Gen. Genet.">
        <title>Cloning and nucleotide sequencing of the genes for ribosomal proteins S9 (rpsI) and L13 (rplM) of Escherichia coli.</title>
        <authorList>
            <person name="Isono S."/>
            <person name="Thamm S."/>
            <person name="Kitakawa M."/>
            <person name="Isono K."/>
        </authorList>
    </citation>
    <scope>NUCLEOTIDE SEQUENCE [GENOMIC DNA]</scope>
</reference>
<reference key="3">
    <citation type="journal article" date="1997" name="Science">
        <title>The complete genome sequence of Escherichia coli K-12.</title>
        <authorList>
            <person name="Blattner F.R."/>
            <person name="Plunkett G. III"/>
            <person name="Bloch C.A."/>
            <person name="Perna N.T."/>
            <person name="Burland V."/>
            <person name="Riley M."/>
            <person name="Collado-Vides J."/>
            <person name="Glasner J.D."/>
            <person name="Rode C.K."/>
            <person name="Mayhew G.F."/>
            <person name="Gregor J."/>
            <person name="Davis N.W."/>
            <person name="Kirkpatrick H.A."/>
            <person name="Goeden M.A."/>
            <person name="Rose D.J."/>
            <person name="Mau B."/>
            <person name="Shao Y."/>
        </authorList>
    </citation>
    <scope>NUCLEOTIDE SEQUENCE [LARGE SCALE GENOMIC DNA]</scope>
    <source>
        <strain>K12 / MG1655 / ATCC 47076</strain>
    </source>
</reference>
<reference key="4">
    <citation type="journal article" date="2006" name="Mol. Syst. Biol.">
        <title>Highly accurate genome sequences of Escherichia coli K-12 strains MG1655 and W3110.</title>
        <authorList>
            <person name="Hayashi K."/>
            <person name="Morooka N."/>
            <person name="Yamamoto Y."/>
            <person name="Fujita K."/>
            <person name="Isono K."/>
            <person name="Choi S."/>
            <person name="Ohtsubo E."/>
            <person name="Baba T."/>
            <person name="Wanner B.L."/>
            <person name="Mori H."/>
            <person name="Horiuchi T."/>
        </authorList>
    </citation>
    <scope>NUCLEOTIDE SEQUENCE [LARGE SCALE GENOMIC DNA]</scope>
    <source>
        <strain>K12 / W3110 / ATCC 27325 / DSM 5911</strain>
    </source>
</reference>
<reference key="5">
    <citation type="journal article" date="1997" name="Electrophoresis">
        <title>Comparing the predicted and observed properties of proteins encoded in the genome of Escherichia coli K-12.</title>
        <authorList>
            <person name="Link A.J."/>
            <person name="Robison K."/>
            <person name="Church G.M."/>
        </authorList>
    </citation>
    <scope>PROTEIN SEQUENCE OF 34-46</scope>
    <source>
        <strain>K12 / EMG2</strain>
    </source>
</reference>
<reference key="6">
    <citation type="journal article" date="1987" name="J. Biol. Chem.">
        <title>Incorporation of six additional proteins to complete the assembly map of the 50 S subunit from Escherichia coli ribosomes.</title>
        <authorList>
            <person name="Herold M."/>
            <person name="Nierhaus K.H."/>
        </authorList>
    </citation>
    <scope>ASSEMBLY MAP OF THE 50S SUBUNIT</scope>
    <source>
        <strain>K12</strain>
    </source>
</reference>
<reference key="7">
    <citation type="journal article" date="1999" name="Anal. Biochem.">
        <title>Observation of Escherichia coli ribosomal proteins and their posttranslational modifications by mass spectrometry.</title>
        <authorList>
            <person name="Arnold R.J."/>
            <person name="Reilly J.P."/>
        </authorList>
    </citation>
    <scope>MASS SPECTROMETRY</scope>
    <scope>SUBUNIT</scope>
    <source>
        <strain>K12 / ATCC 25404 / DSM 5698 / NCIMB 11290</strain>
    </source>
</reference>
<reference key="8">
    <citation type="journal article" date="2014" name="Curr. Opin. Struct. Biol.">
        <title>A new system for naming ribosomal proteins.</title>
        <authorList>
            <person name="Ban N."/>
            <person name="Beckmann R."/>
            <person name="Cate J.H.D."/>
            <person name="Dinman J.D."/>
            <person name="Dragon F."/>
            <person name="Ellis S.R."/>
            <person name="Lafontaine D.L.J."/>
            <person name="Lindahl L."/>
            <person name="Liljas A."/>
            <person name="Lipton J.M."/>
            <person name="McAlear M.A."/>
            <person name="Moore P.B."/>
            <person name="Noller H.F."/>
            <person name="Ortega J."/>
            <person name="Panse V.G."/>
            <person name="Ramakrishnan V."/>
            <person name="Spahn C.M.T."/>
            <person name="Steitz T.A."/>
            <person name="Tchorzewski M."/>
            <person name="Tollervey D."/>
            <person name="Warren A.J."/>
            <person name="Williamson J.R."/>
            <person name="Wilson D."/>
            <person name="Yonath A."/>
            <person name="Yusupov M."/>
        </authorList>
    </citation>
    <scope>NOMENCLATURE</scope>
</reference>
<reference key="9">
    <citation type="journal article" date="2003" name="Cell">
        <title>Study of the structural dynamics of the E. coli 70S ribosome using real-space refinement.</title>
        <authorList>
            <person name="Gao H."/>
            <person name="Sengupta J."/>
            <person name="Valle M."/>
            <person name="Korostelev A."/>
            <person name="Eswar N."/>
            <person name="Stagg S.M."/>
            <person name="Van Roey P."/>
            <person name="Agrawal R.K."/>
            <person name="Harvey S.C."/>
            <person name="Sali A."/>
            <person name="Chapman M.S."/>
            <person name="Frank J."/>
        </authorList>
    </citation>
    <scope>STRUCTURE BY ELECTRON MICROSCOPY (11.50 ANGSTROMS)</scope>
    <scope>SUBUNIT</scope>
    <source>
        <strain>MRE-600</strain>
    </source>
</reference>
<reference key="10">
    <citation type="journal article" date="2005" name="Science">
        <title>Structures of the bacterial ribosome at 3.5 A resolution.</title>
        <authorList>
            <person name="Schuwirth B.S."/>
            <person name="Borovinskaya M.A."/>
            <person name="Hau C.W."/>
            <person name="Zhang W."/>
            <person name="Vila-Sanjurjo A."/>
            <person name="Holton J.M."/>
            <person name="Cate J.H.D."/>
        </authorList>
    </citation>
    <scope>X-RAY CRYSTALLOGRAPHY (3.46 ANGSTROMS) OF 2 DIFFERENT RIBOSOME STRUCTURES</scope>
    <scope>SUBUNIT</scope>
    <source>
        <strain>MRE-600</strain>
    </source>
</reference>
<reference key="11">
    <citation type="journal article" date="2014" name="Cell Rep.">
        <title>Molecular basis for the ribosome functioning as an L-tryptophan sensor.</title>
        <authorList>
            <person name="Bischoff L."/>
            <person name="Berninghausen O."/>
            <person name="Beckmann R."/>
        </authorList>
    </citation>
    <scope>STRUCTURE BY ELECTRON MICROSCOPY (3.80 ANGSTROMS) OF TNAC-STALLED 50S RIBOSOMAL SUBUNIT</scope>
    <scope>SUBUNIT</scope>
    <source>
        <strain>K12 / A19 / KC6</strain>
    </source>
</reference>
<reference key="12">
    <citation type="journal article" date="2014" name="PLoS Biol.">
        <title>Structural and functional insights into the mode of action of a universally conserved Obg GTPase.</title>
        <authorList>
            <person name="Feng B."/>
            <person name="Mandava C.S."/>
            <person name="Guo Q."/>
            <person name="Wang J."/>
            <person name="Cao W."/>
            <person name="Li N."/>
            <person name="Zhang Y."/>
            <person name="Zhang Y."/>
            <person name="Wang Z."/>
            <person name="Wu J."/>
            <person name="Sanyal S."/>
            <person name="Lei J."/>
            <person name="Gao N."/>
        </authorList>
    </citation>
    <scope>STRUCTURE BY ELECTRON MICROSCOPY (5.5 ANGSTROMS) OF 50S RIBOSOMAL SUBUNIT IN COMPLEX WITH OBGE AND GMP-PNP</scope>
    <scope>SUBUNIT</scope>
</reference>
<reference key="13">
    <citation type="journal article" date="2017" name="Nature">
        <title>Mechanistic insights into the alternative translation termination by ArfA and RF2.</title>
        <authorList>
            <person name="Ma C."/>
            <person name="Kurita D."/>
            <person name="Li N."/>
            <person name="Chen Y."/>
            <person name="Himeno H."/>
            <person name="Gao N."/>
        </authorList>
    </citation>
    <scope>STRUCTURE BY ELECTRON MICROSCOPY (3.0 ANGSTROMS) OF 70S RIBOSOME IN COMPLEX WITH ARFA AND RF2</scope>
    <scope>SUBUNIT</scope>
</reference>
<reference key="14">
    <citation type="journal article" date="2017" name="Nature">
        <title>Structural basis for ArfA-RF2-mediated translation termination on mRNAs lacking stop codons.</title>
        <authorList>
            <person name="Huter P."/>
            <person name="Mueller C."/>
            <person name="Beckert B."/>
            <person name="Arenz S."/>
            <person name="Berninghausen O."/>
            <person name="Beckmann R."/>
            <person name="Wilson D.N."/>
        </authorList>
    </citation>
    <scope>STRUCTURE BY ELECTRON MICROSCOPY (3.1 ANGSTROMS) OF 70S RIBOSOME IN COMPLEX WITH ARFA AND RF2</scope>
    <scope>SUBUNIT</scope>
</reference>
<reference key="15">
    <citation type="journal article" date="2016" name="Science">
        <title>Translational termination without a stop codon.</title>
        <authorList>
            <person name="James N.R."/>
            <person name="Brown A."/>
            <person name="Gordiyenko Y."/>
            <person name="Ramakrishnan V."/>
        </authorList>
    </citation>
    <scope>STRUCTURE BY ELECTRON MICROSCOPY (2.97 ANGSTROMS) OF 70S RIBOSOME IN COMPLEX WITH ARFA AND RF2</scope>
    <scope>SUBUNIT</scope>
</reference>
<reference key="16">
    <citation type="journal article" date="2017" name="Nature">
        <title>Structural basis of co-translational quality control by ArfA and RF2 bound to ribosome.</title>
        <authorList>
            <person name="Zeng F."/>
            <person name="Chen Y."/>
            <person name="Remis J."/>
            <person name="Shekhar M."/>
            <person name="Phillips J.C."/>
            <person name="Tajkhorshid E."/>
            <person name="Jin H."/>
        </authorList>
    </citation>
    <scope>STRUCTURE BY ELECTRON MICROSCOPY (3.52 ANGSTROMS) OF 70S RIBOSOME IN COMPLEX WITH ARFA AND RF2</scope>
    <scope>SUBUNIT</scope>
</reference>
<keyword id="KW-0002">3D-structure</keyword>
<keyword id="KW-0903">Direct protein sequencing</keyword>
<keyword id="KW-1185">Reference proteome</keyword>
<keyword id="KW-0687">Ribonucleoprotein</keyword>
<keyword id="KW-0689">Ribosomal protein</keyword>
<organism>
    <name type="scientific">Escherichia coli (strain K12)</name>
    <dbReference type="NCBI Taxonomy" id="83333"/>
    <lineage>
        <taxon>Bacteria</taxon>
        <taxon>Pseudomonadati</taxon>
        <taxon>Pseudomonadota</taxon>
        <taxon>Gammaproteobacteria</taxon>
        <taxon>Enterobacterales</taxon>
        <taxon>Enterobacteriaceae</taxon>
        <taxon>Escherichia</taxon>
    </lineage>
</organism>
<evidence type="ECO:0000255" key="1">
    <source>
        <dbReference type="HAMAP-Rule" id="MF_01366"/>
    </source>
</evidence>
<evidence type="ECO:0000269" key="2">
    <source>
    </source>
</evidence>
<evidence type="ECO:0000269" key="3">
    <source>
    </source>
</evidence>
<evidence type="ECO:0000269" key="4">
    <source>
    </source>
</evidence>
<evidence type="ECO:0000269" key="5">
    <source>
    </source>
</evidence>
<evidence type="ECO:0000269" key="6">
    <source>
    </source>
</evidence>
<evidence type="ECO:0000269" key="7">
    <source>
    </source>
</evidence>
<evidence type="ECO:0000269" key="8">
    <source>
    </source>
</evidence>
<evidence type="ECO:0000269" key="9">
    <source>
    </source>
</evidence>
<evidence type="ECO:0000269" key="10">
    <source>
    </source>
</evidence>
<evidence type="ECO:0000269" key="11">
    <source>
    </source>
</evidence>
<evidence type="ECO:0000303" key="12">
    <source>
    </source>
</evidence>
<evidence type="ECO:0007829" key="13">
    <source>
        <dbReference type="PDB" id="7BL4"/>
    </source>
</evidence>
<evidence type="ECO:0007829" key="14">
    <source>
        <dbReference type="PDB" id="7QQ3"/>
    </source>
</evidence>
<evidence type="ECO:0007829" key="15">
    <source>
        <dbReference type="PDB" id="8CGK"/>
    </source>
</evidence>
<proteinExistence type="evidence at protein level"/>
<feature type="chain" id="PRO_0000133734" description="Large ribosomal subunit protein uL13">
    <location>
        <begin position="1"/>
        <end position="142"/>
    </location>
</feature>
<feature type="helix" evidence="15">
    <location>
        <begin position="8"/>
        <end position="10"/>
    </location>
</feature>
<feature type="strand" evidence="15">
    <location>
        <begin position="15"/>
        <end position="19"/>
    </location>
</feature>
<feature type="helix" evidence="15">
    <location>
        <begin position="25"/>
        <end position="37"/>
    </location>
</feature>
<feature type="turn" evidence="15">
    <location>
        <begin position="38"/>
        <end position="40"/>
    </location>
</feature>
<feature type="strand" evidence="15">
    <location>
        <begin position="53"/>
        <end position="57"/>
    </location>
</feature>
<feature type="helix" evidence="15">
    <location>
        <begin position="59"/>
        <end position="61"/>
    </location>
</feature>
<feature type="helix" evidence="15">
    <location>
        <begin position="68"/>
        <end position="71"/>
    </location>
</feature>
<feature type="strand" evidence="15">
    <location>
        <begin position="73"/>
        <end position="77"/>
    </location>
</feature>
<feature type="strand" evidence="14">
    <location>
        <begin position="79"/>
        <end position="82"/>
    </location>
</feature>
<feature type="strand" evidence="15">
    <location>
        <begin position="84"/>
        <end position="88"/>
    </location>
</feature>
<feature type="helix" evidence="15">
    <location>
        <begin position="89"/>
        <end position="95"/>
    </location>
</feature>
<feature type="helix" evidence="15">
    <location>
        <begin position="97"/>
        <end position="108"/>
    </location>
</feature>
<feature type="helix" evidence="15">
    <location>
        <begin position="113"/>
        <end position="119"/>
    </location>
</feature>
<feature type="strand" evidence="15">
    <location>
        <begin position="122"/>
        <end position="124"/>
    </location>
</feature>
<feature type="strand" evidence="15">
    <location>
        <begin position="126"/>
        <end position="128"/>
    </location>
</feature>
<feature type="helix" evidence="15">
    <location>
        <begin position="133"/>
        <end position="135"/>
    </location>
</feature>
<feature type="strand" evidence="13">
    <location>
        <begin position="138"/>
        <end position="140"/>
    </location>
</feature>
<dbReference type="EMBL" id="X02130">
    <property type="protein sequence ID" value="CAA26041.1"/>
    <property type="molecule type" value="Genomic_DNA"/>
</dbReference>
<dbReference type="EMBL" id="U18997">
    <property type="protein sequence ID" value="AAA58033.1"/>
    <property type="molecule type" value="Genomic_DNA"/>
</dbReference>
<dbReference type="EMBL" id="U00096">
    <property type="protein sequence ID" value="AAC76263.1"/>
    <property type="molecule type" value="Genomic_DNA"/>
</dbReference>
<dbReference type="EMBL" id="AP009048">
    <property type="protein sequence ID" value="BAE77274.1"/>
    <property type="molecule type" value="Genomic_DNA"/>
</dbReference>
<dbReference type="PIR" id="A02787">
    <property type="entry name" value="R5EC13"/>
</dbReference>
<dbReference type="RefSeq" id="NP_417698.1">
    <property type="nucleotide sequence ID" value="NC_000913.3"/>
</dbReference>
<dbReference type="RefSeq" id="WP_000847559.1">
    <property type="nucleotide sequence ID" value="NZ_STEB01000012.1"/>
</dbReference>
<dbReference type="PDB" id="1ML5">
    <property type="method" value="EM"/>
    <property type="resolution" value="14.00 A"/>
    <property type="chains" value="m=1-142"/>
</dbReference>
<dbReference type="PDB" id="2J28">
    <property type="method" value="EM"/>
    <property type="resolution" value="8.00 A"/>
    <property type="chains" value="J=1-140"/>
</dbReference>
<dbReference type="PDB" id="2RDO">
    <property type="method" value="EM"/>
    <property type="resolution" value="9.10 A"/>
    <property type="chains" value="J=1-142"/>
</dbReference>
<dbReference type="PDB" id="3BBX">
    <property type="method" value="EM"/>
    <property type="resolution" value="10.00 A"/>
    <property type="chains" value="J=1-142"/>
</dbReference>
<dbReference type="PDB" id="3IY9">
    <property type="method" value="EM"/>
    <property type="resolution" value="14.10 A"/>
    <property type="chains" value="J=1-140"/>
</dbReference>
<dbReference type="PDB" id="3J5L">
    <property type="method" value="EM"/>
    <property type="resolution" value="6.60 A"/>
    <property type="chains" value="J=1-142"/>
</dbReference>
<dbReference type="PDB" id="3J7Z">
    <property type="method" value="EM"/>
    <property type="resolution" value="3.90 A"/>
    <property type="chains" value="J=1-142"/>
</dbReference>
<dbReference type="PDB" id="3J8G">
    <property type="method" value="EM"/>
    <property type="resolution" value="5.00 A"/>
    <property type="chains" value="J=1-142"/>
</dbReference>
<dbReference type="PDB" id="3J9Y">
    <property type="method" value="EM"/>
    <property type="resolution" value="3.90 A"/>
    <property type="chains" value="J=1-142"/>
</dbReference>
<dbReference type="PDB" id="3J9Z">
    <property type="method" value="EM"/>
    <property type="resolution" value="3.60 A"/>
    <property type="chains" value="LF=1-142"/>
</dbReference>
<dbReference type="PDB" id="3JA1">
    <property type="method" value="EM"/>
    <property type="resolution" value="3.60 A"/>
    <property type="chains" value="LL=1-142"/>
</dbReference>
<dbReference type="PDB" id="3JBU">
    <property type="method" value="EM"/>
    <property type="resolution" value="3.64 A"/>
    <property type="chains" value="j=1-142"/>
</dbReference>
<dbReference type="PDB" id="3JBV">
    <property type="method" value="EM"/>
    <property type="resolution" value="3.32 A"/>
    <property type="chains" value="j=1-142"/>
</dbReference>
<dbReference type="PDB" id="3JCD">
    <property type="method" value="EM"/>
    <property type="resolution" value="3.70 A"/>
    <property type="chains" value="J=1-142"/>
</dbReference>
<dbReference type="PDB" id="3JCE">
    <property type="method" value="EM"/>
    <property type="resolution" value="3.20 A"/>
    <property type="chains" value="J=1-142"/>
</dbReference>
<dbReference type="PDB" id="3JCJ">
    <property type="method" value="EM"/>
    <property type="resolution" value="3.70 A"/>
    <property type="chains" value="I=1-142"/>
</dbReference>
<dbReference type="PDB" id="3JCN">
    <property type="method" value="EM"/>
    <property type="resolution" value="4.60 A"/>
    <property type="chains" value="J=1-142"/>
</dbReference>
<dbReference type="PDB" id="4CSU">
    <property type="method" value="EM"/>
    <property type="resolution" value="5.50 A"/>
    <property type="chains" value="J=1-142"/>
</dbReference>
<dbReference type="PDB" id="4U1U">
    <property type="method" value="X-ray"/>
    <property type="resolution" value="2.95 A"/>
    <property type="chains" value="BJ/DJ=1-142"/>
</dbReference>
<dbReference type="PDB" id="4U1V">
    <property type="method" value="X-ray"/>
    <property type="resolution" value="3.00 A"/>
    <property type="chains" value="BJ/DJ=1-142"/>
</dbReference>
<dbReference type="PDB" id="4U20">
    <property type="method" value="X-ray"/>
    <property type="resolution" value="2.90 A"/>
    <property type="chains" value="BJ/DJ=1-142"/>
</dbReference>
<dbReference type="PDB" id="4U24">
    <property type="method" value="X-ray"/>
    <property type="resolution" value="2.90 A"/>
    <property type="chains" value="BJ/DJ=1-142"/>
</dbReference>
<dbReference type="PDB" id="4U25">
    <property type="method" value="X-ray"/>
    <property type="resolution" value="2.90 A"/>
    <property type="chains" value="BJ/DJ=1-142"/>
</dbReference>
<dbReference type="PDB" id="4U26">
    <property type="method" value="X-ray"/>
    <property type="resolution" value="2.80 A"/>
    <property type="chains" value="BJ/DJ=1-142"/>
</dbReference>
<dbReference type="PDB" id="4U27">
    <property type="method" value="X-ray"/>
    <property type="resolution" value="2.80 A"/>
    <property type="chains" value="BJ/DJ=1-142"/>
</dbReference>
<dbReference type="PDB" id="4UY8">
    <property type="method" value="EM"/>
    <property type="resolution" value="3.80 A"/>
    <property type="chains" value="J=1-142"/>
</dbReference>
<dbReference type="PDB" id="4V47">
    <property type="method" value="EM"/>
    <property type="resolution" value="12.30 A"/>
    <property type="chains" value="AH=1-142"/>
</dbReference>
<dbReference type="PDB" id="4V48">
    <property type="method" value="EM"/>
    <property type="resolution" value="11.50 A"/>
    <property type="chains" value="AH=1-142"/>
</dbReference>
<dbReference type="PDB" id="4V4H">
    <property type="method" value="X-ray"/>
    <property type="resolution" value="3.46 A"/>
    <property type="chains" value="BJ/DJ=1-142"/>
</dbReference>
<dbReference type="PDB" id="4V4Q">
    <property type="method" value="X-ray"/>
    <property type="resolution" value="3.46 A"/>
    <property type="chains" value="BJ/DJ=1-142"/>
</dbReference>
<dbReference type="PDB" id="4V4V">
    <property type="method" value="EM"/>
    <property type="resolution" value="15.00 A"/>
    <property type="chains" value="BH=1-142"/>
</dbReference>
<dbReference type="PDB" id="4V4W">
    <property type="method" value="EM"/>
    <property type="resolution" value="15.00 A"/>
    <property type="chains" value="BH=1-142"/>
</dbReference>
<dbReference type="PDB" id="4V50">
    <property type="method" value="X-ray"/>
    <property type="resolution" value="3.22 A"/>
    <property type="chains" value="BJ/DJ=1-142"/>
</dbReference>
<dbReference type="PDB" id="4V52">
    <property type="method" value="X-ray"/>
    <property type="resolution" value="3.21 A"/>
    <property type="chains" value="BJ/DJ=1-142"/>
</dbReference>
<dbReference type="PDB" id="4V53">
    <property type="method" value="X-ray"/>
    <property type="resolution" value="3.54 A"/>
    <property type="chains" value="BJ/DJ=1-142"/>
</dbReference>
<dbReference type="PDB" id="4V54">
    <property type="method" value="X-ray"/>
    <property type="resolution" value="3.30 A"/>
    <property type="chains" value="BJ/DJ=1-142"/>
</dbReference>
<dbReference type="PDB" id="4V55">
    <property type="method" value="X-ray"/>
    <property type="resolution" value="4.00 A"/>
    <property type="chains" value="BJ/DJ=1-142"/>
</dbReference>
<dbReference type="PDB" id="4V56">
    <property type="method" value="X-ray"/>
    <property type="resolution" value="3.93 A"/>
    <property type="chains" value="BJ/DJ=1-142"/>
</dbReference>
<dbReference type="PDB" id="4V57">
    <property type="method" value="X-ray"/>
    <property type="resolution" value="3.50 A"/>
    <property type="chains" value="BJ/DJ=1-142"/>
</dbReference>
<dbReference type="PDB" id="4V5B">
    <property type="method" value="X-ray"/>
    <property type="resolution" value="3.74 A"/>
    <property type="chains" value="AJ/CJ=1-142"/>
</dbReference>
<dbReference type="PDB" id="4V5H">
    <property type="method" value="EM"/>
    <property type="resolution" value="5.80 A"/>
    <property type="chains" value="BJ=1-142"/>
</dbReference>
<dbReference type="PDB" id="4V5Y">
    <property type="method" value="X-ray"/>
    <property type="resolution" value="4.45 A"/>
    <property type="chains" value="BJ/DJ=1-142"/>
</dbReference>
<dbReference type="PDB" id="4V64">
    <property type="method" value="X-ray"/>
    <property type="resolution" value="3.50 A"/>
    <property type="chains" value="BJ/DJ=1-142"/>
</dbReference>
<dbReference type="PDB" id="4V65">
    <property type="method" value="EM"/>
    <property type="resolution" value="9.00 A"/>
    <property type="chains" value="B6=1-140"/>
</dbReference>
<dbReference type="PDB" id="4V66">
    <property type="method" value="EM"/>
    <property type="resolution" value="9.00 A"/>
    <property type="chains" value="B6=1-140"/>
</dbReference>
<dbReference type="PDB" id="4V69">
    <property type="method" value="EM"/>
    <property type="resolution" value="6.70 A"/>
    <property type="chains" value="BJ=1-142"/>
</dbReference>
<dbReference type="PDB" id="4V6C">
    <property type="method" value="X-ray"/>
    <property type="resolution" value="3.19 A"/>
    <property type="chains" value="BJ/DJ=1-142"/>
</dbReference>
<dbReference type="PDB" id="4V6D">
    <property type="method" value="X-ray"/>
    <property type="resolution" value="3.81 A"/>
    <property type="chains" value="BJ/DJ=1-142"/>
</dbReference>
<dbReference type="PDB" id="4V6E">
    <property type="method" value="X-ray"/>
    <property type="resolution" value="3.71 A"/>
    <property type="chains" value="BJ/DJ=1-142"/>
</dbReference>
<dbReference type="PDB" id="4V6K">
    <property type="method" value="EM"/>
    <property type="resolution" value="8.25 A"/>
    <property type="chains" value="AK=1-142"/>
</dbReference>
<dbReference type="PDB" id="4V6L">
    <property type="method" value="EM"/>
    <property type="resolution" value="13.20 A"/>
    <property type="chains" value="BK=1-142"/>
</dbReference>
<dbReference type="PDB" id="4V6M">
    <property type="method" value="EM"/>
    <property type="resolution" value="7.10 A"/>
    <property type="chains" value="BJ=1-142"/>
</dbReference>
<dbReference type="PDB" id="4V6N">
    <property type="method" value="EM"/>
    <property type="resolution" value="12.10 A"/>
    <property type="chains" value="AL=1-142"/>
</dbReference>
<dbReference type="PDB" id="4V6O">
    <property type="method" value="EM"/>
    <property type="resolution" value="14.70 A"/>
    <property type="chains" value="BL=1-142"/>
</dbReference>
<dbReference type="PDB" id="4V6P">
    <property type="method" value="EM"/>
    <property type="resolution" value="13.50 A"/>
    <property type="chains" value="BL=1-142"/>
</dbReference>
<dbReference type="PDB" id="4V6Q">
    <property type="method" value="EM"/>
    <property type="resolution" value="11.50 A"/>
    <property type="chains" value="BL=1-142"/>
</dbReference>
<dbReference type="PDB" id="4V6R">
    <property type="method" value="EM"/>
    <property type="resolution" value="11.50 A"/>
    <property type="chains" value="BL=1-142"/>
</dbReference>
<dbReference type="PDB" id="4V6S">
    <property type="method" value="EM"/>
    <property type="resolution" value="13.10 A"/>
    <property type="chains" value="AL=1-142"/>
</dbReference>
<dbReference type="PDB" id="4V6T">
    <property type="method" value="EM"/>
    <property type="resolution" value="8.30 A"/>
    <property type="chains" value="BJ=1-142"/>
</dbReference>
<dbReference type="PDB" id="4V6V">
    <property type="method" value="EM"/>
    <property type="resolution" value="9.80 A"/>
    <property type="chains" value="BN=1-142"/>
</dbReference>
<dbReference type="PDB" id="4V6Y">
    <property type="method" value="EM"/>
    <property type="resolution" value="12.00 A"/>
    <property type="chains" value="BJ=1-142"/>
</dbReference>
<dbReference type="PDB" id="4V6Z">
    <property type="method" value="EM"/>
    <property type="resolution" value="12.00 A"/>
    <property type="chains" value="BJ=1-142"/>
</dbReference>
<dbReference type="PDB" id="4V70">
    <property type="method" value="EM"/>
    <property type="resolution" value="17.00 A"/>
    <property type="chains" value="BJ=1-142"/>
</dbReference>
<dbReference type="PDB" id="4V71">
    <property type="method" value="EM"/>
    <property type="resolution" value="20.00 A"/>
    <property type="chains" value="BJ=1-142"/>
</dbReference>
<dbReference type="PDB" id="4V72">
    <property type="method" value="EM"/>
    <property type="resolution" value="13.00 A"/>
    <property type="chains" value="BJ=1-142"/>
</dbReference>
<dbReference type="PDB" id="4V73">
    <property type="method" value="EM"/>
    <property type="resolution" value="15.00 A"/>
    <property type="chains" value="BJ=1-142"/>
</dbReference>
<dbReference type="PDB" id="4V74">
    <property type="method" value="EM"/>
    <property type="resolution" value="17.00 A"/>
    <property type="chains" value="BJ=1-142"/>
</dbReference>
<dbReference type="PDB" id="4V75">
    <property type="method" value="EM"/>
    <property type="resolution" value="12.00 A"/>
    <property type="chains" value="BJ=1-142"/>
</dbReference>
<dbReference type="PDB" id="4V76">
    <property type="method" value="EM"/>
    <property type="resolution" value="17.00 A"/>
    <property type="chains" value="BJ=1-142"/>
</dbReference>
<dbReference type="PDB" id="4V77">
    <property type="method" value="EM"/>
    <property type="resolution" value="17.00 A"/>
    <property type="chains" value="BJ=1-142"/>
</dbReference>
<dbReference type="PDB" id="4V78">
    <property type="method" value="EM"/>
    <property type="resolution" value="20.00 A"/>
    <property type="chains" value="BJ=1-142"/>
</dbReference>
<dbReference type="PDB" id="4V79">
    <property type="method" value="EM"/>
    <property type="resolution" value="15.00 A"/>
    <property type="chains" value="BJ=1-142"/>
</dbReference>
<dbReference type="PDB" id="4V7A">
    <property type="method" value="EM"/>
    <property type="resolution" value="9.00 A"/>
    <property type="chains" value="BJ=1-142"/>
</dbReference>
<dbReference type="PDB" id="4V7B">
    <property type="method" value="EM"/>
    <property type="resolution" value="6.80 A"/>
    <property type="chains" value="BJ=1-142"/>
</dbReference>
<dbReference type="PDB" id="4V7C">
    <property type="method" value="EM"/>
    <property type="resolution" value="7.60 A"/>
    <property type="chains" value="BL=1-142"/>
</dbReference>
<dbReference type="PDB" id="4V7D">
    <property type="method" value="EM"/>
    <property type="resolution" value="7.60 A"/>
    <property type="chains" value="AM=1-142"/>
</dbReference>
<dbReference type="PDB" id="4V7I">
    <property type="method" value="EM"/>
    <property type="resolution" value="9.60 A"/>
    <property type="chains" value="AJ=1-142"/>
</dbReference>
<dbReference type="PDB" id="4V7S">
    <property type="method" value="X-ray"/>
    <property type="resolution" value="3.25 A"/>
    <property type="chains" value="BJ/DJ=1-142"/>
</dbReference>
<dbReference type="PDB" id="4V7T">
    <property type="method" value="X-ray"/>
    <property type="resolution" value="3.19 A"/>
    <property type="chains" value="BJ/DJ=1-142"/>
</dbReference>
<dbReference type="PDB" id="4V7U">
    <property type="method" value="X-ray"/>
    <property type="resolution" value="3.10 A"/>
    <property type="chains" value="BJ/DJ=1-142"/>
</dbReference>
<dbReference type="PDB" id="4V7V">
    <property type="method" value="X-ray"/>
    <property type="resolution" value="3.29 A"/>
    <property type="chains" value="BJ/DJ=1-142"/>
</dbReference>
<dbReference type="PDB" id="4V85">
    <property type="method" value="X-ray"/>
    <property type="resolution" value="3.20 A"/>
    <property type="chains" value="BN=1-142"/>
</dbReference>
<dbReference type="PDB" id="4V89">
    <property type="method" value="X-ray"/>
    <property type="resolution" value="3.70 A"/>
    <property type="chains" value="BN=1-142"/>
</dbReference>
<dbReference type="PDB" id="4V9C">
    <property type="method" value="X-ray"/>
    <property type="resolution" value="3.30 A"/>
    <property type="chains" value="BJ/DJ=1-142"/>
</dbReference>
<dbReference type="PDB" id="4V9D">
    <property type="method" value="X-ray"/>
    <property type="resolution" value="3.00 A"/>
    <property type="chains" value="CJ/DJ=1-142"/>
</dbReference>
<dbReference type="PDB" id="4V9O">
    <property type="method" value="X-ray"/>
    <property type="resolution" value="2.90 A"/>
    <property type="chains" value="AJ/CJ/EJ/GJ=1-142"/>
</dbReference>
<dbReference type="PDB" id="4V9P">
    <property type="method" value="X-ray"/>
    <property type="resolution" value="2.90 A"/>
    <property type="chains" value="AJ/CJ/EJ/GJ=1-142"/>
</dbReference>
<dbReference type="PDB" id="4WF1">
    <property type="method" value="X-ray"/>
    <property type="resolution" value="3.09 A"/>
    <property type="chains" value="BJ/DJ=1-142"/>
</dbReference>
<dbReference type="PDB" id="4WOI">
    <property type="method" value="X-ray"/>
    <property type="resolution" value="3.00 A"/>
    <property type="chains" value="BJ/CJ=1-142"/>
</dbReference>
<dbReference type="PDB" id="4WWW">
    <property type="method" value="X-ray"/>
    <property type="resolution" value="3.10 A"/>
    <property type="chains" value="RJ/YJ=1-142"/>
</dbReference>
<dbReference type="PDB" id="4YBB">
    <property type="method" value="X-ray"/>
    <property type="resolution" value="2.10 A"/>
    <property type="chains" value="CK/DK=1-142"/>
</dbReference>
<dbReference type="PDB" id="5ADY">
    <property type="method" value="EM"/>
    <property type="resolution" value="4.50 A"/>
    <property type="chains" value="J=1-142"/>
</dbReference>
<dbReference type="PDB" id="5AFI">
    <property type="method" value="EM"/>
    <property type="resolution" value="2.90 A"/>
    <property type="chains" value="J=1-142"/>
</dbReference>
<dbReference type="PDB" id="5AKA">
    <property type="method" value="EM"/>
    <property type="resolution" value="5.70 A"/>
    <property type="chains" value="J=1-142"/>
</dbReference>
<dbReference type="PDB" id="5GAD">
    <property type="method" value="EM"/>
    <property type="resolution" value="3.70 A"/>
    <property type="chains" value="K=1-142"/>
</dbReference>
<dbReference type="PDB" id="5GAE">
    <property type="method" value="EM"/>
    <property type="resolution" value="3.33 A"/>
    <property type="chains" value="K=1-142"/>
</dbReference>
<dbReference type="PDB" id="5GAF">
    <property type="method" value="EM"/>
    <property type="resolution" value="4.30 A"/>
    <property type="chains" value="K=1-142"/>
</dbReference>
<dbReference type="PDB" id="5GAG">
    <property type="method" value="EM"/>
    <property type="resolution" value="3.80 A"/>
    <property type="chains" value="K=1-142"/>
</dbReference>
<dbReference type="PDB" id="5GAH">
    <property type="method" value="EM"/>
    <property type="resolution" value="3.80 A"/>
    <property type="chains" value="K=1-142"/>
</dbReference>
<dbReference type="PDB" id="5H5U">
    <property type="method" value="EM"/>
    <property type="resolution" value="3.00 A"/>
    <property type="chains" value="K=1-142"/>
</dbReference>
<dbReference type="PDB" id="5IQR">
    <property type="method" value="EM"/>
    <property type="resolution" value="3.00 A"/>
    <property type="chains" value="J=1-142"/>
</dbReference>
<dbReference type="PDB" id="5IT8">
    <property type="method" value="X-ray"/>
    <property type="resolution" value="3.12 A"/>
    <property type="chains" value="CK/DK=1-142"/>
</dbReference>
<dbReference type="PDB" id="5J5B">
    <property type="method" value="X-ray"/>
    <property type="resolution" value="2.80 A"/>
    <property type="chains" value="CK/DK=1-142"/>
</dbReference>
<dbReference type="PDB" id="5J7L">
    <property type="method" value="X-ray"/>
    <property type="resolution" value="3.00 A"/>
    <property type="chains" value="CK/DK=1-142"/>
</dbReference>
<dbReference type="PDB" id="5J88">
    <property type="method" value="X-ray"/>
    <property type="resolution" value="3.32 A"/>
    <property type="chains" value="CK/DK=1-142"/>
</dbReference>
<dbReference type="PDB" id="5J8A">
    <property type="method" value="X-ray"/>
    <property type="resolution" value="3.10 A"/>
    <property type="chains" value="CK/DK=1-142"/>
</dbReference>
<dbReference type="PDB" id="5J91">
    <property type="method" value="X-ray"/>
    <property type="resolution" value="2.96 A"/>
    <property type="chains" value="CK/DK=1-142"/>
</dbReference>
<dbReference type="PDB" id="5JC9">
    <property type="method" value="X-ray"/>
    <property type="resolution" value="3.03 A"/>
    <property type="chains" value="CK/DK=1-142"/>
</dbReference>
<dbReference type="PDB" id="5JTE">
    <property type="method" value="EM"/>
    <property type="resolution" value="3.60 A"/>
    <property type="chains" value="BJ=1-142"/>
</dbReference>
<dbReference type="PDB" id="5JU8">
    <property type="method" value="EM"/>
    <property type="resolution" value="3.60 A"/>
    <property type="chains" value="BJ=1-142"/>
</dbReference>
<dbReference type="PDB" id="5KCR">
    <property type="method" value="EM"/>
    <property type="resolution" value="3.60 A"/>
    <property type="chains" value="1N=1-142"/>
</dbReference>
<dbReference type="PDB" id="5KCS">
    <property type="method" value="EM"/>
    <property type="resolution" value="3.90 A"/>
    <property type="chains" value="1N=1-142"/>
</dbReference>
<dbReference type="PDB" id="5KPS">
    <property type="method" value="EM"/>
    <property type="resolution" value="3.90 A"/>
    <property type="chains" value="J=1-142"/>
</dbReference>
<dbReference type="PDB" id="5KPV">
    <property type="method" value="EM"/>
    <property type="resolution" value="4.10 A"/>
    <property type="chains" value="I=1-142"/>
</dbReference>
<dbReference type="PDB" id="5KPW">
    <property type="method" value="EM"/>
    <property type="resolution" value="3.90 A"/>
    <property type="chains" value="I=1-142"/>
</dbReference>
<dbReference type="PDB" id="5KPX">
    <property type="method" value="EM"/>
    <property type="resolution" value="3.90 A"/>
    <property type="chains" value="I=1-142"/>
</dbReference>
<dbReference type="PDB" id="5L3P">
    <property type="method" value="EM"/>
    <property type="resolution" value="3.70 A"/>
    <property type="chains" value="N=1-142"/>
</dbReference>
<dbReference type="PDB" id="5LZA">
    <property type="method" value="EM"/>
    <property type="resolution" value="3.60 A"/>
    <property type="chains" value="J=1-142"/>
</dbReference>
<dbReference type="PDB" id="5LZB">
    <property type="method" value="EM"/>
    <property type="resolution" value="5.30 A"/>
    <property type="chains" value="J=1-142"/>
</dbReference>
<dbReference type="PDB" id="5LZC">
    <property type="method" value="EM"/>
    <property type="resolution" value="4.80 A"/>
    <property type="chains" value="J=1-142"/>
</dbReference>
<dbReference type="PDB" id="5LZD">
    <property type="method" value="EM"/>
    <property type="resolution" value="3.40 A"/>
    <property type="chains" value="J=1-142"/>
</dbReference>
<dbReference type="PDB" id="5LZE">
    <property type="method" value="EM"/>
    <property type="resolution" value="3.50 A"/>
    <property type="chains" value="J=1-142"/>
</dbReference>
<dbReference type="PDB" id="5LZF">
    <property type="method" value="EM"/>
    <property type="resolution" value="4.60 A"/>
    <property type="chains" value="J=1-142"/>
</dbReference>
<dbReference type="PDB" id="5MDV">
    <property type="method" value="EM"/>
    <property type="resolution" value="2.97 A"/>
    <property type="chains" value="J=1-142"/>
</dbReference>
<dbReference type="PDB" id="5MDW">
    <property type="method" value="EM"/>
    <property type="resolution" value="3.06 A"/>
    <property type="chains" value="J=1-142"/>
</dbReference>
<dbReference type="PDB" id="5MDY">
    <property type="method" value="EM"/>
    <property type="resolution" value="3.35 A"/>
    <property type="chains" value="J=1-142"/>
</dbReference>
<dbReference type="PDB" id="5MDZ">
    <property type="method" value="EM"/>
    <property type="resolution" value="3.10 A"/>
    <property type="chains" value="J=1-142"/>
</dbReference>
<dbReference type="PDB" id="5MGP">
    <property type="method" value="EM"/>
    <property type="resolution" value="3.10 A"/>
    <property type="chains" value="J=1-142"/>
</dbReference>
<dbReference type="PDB" id="5NCO">
    <property type="method" value="EM"/>
    <property type="resolution" value="4.80 A"/>
    <property type="chains" value="K=1-142"/>
</dbReference>
<dbReference type="PDB" id="5NP6">
    <property type="method" value="EM"/>
    <property type="resolution" value="3.60 A"/>
    <property type="chains" value="h=1-142"/>
</dbReference>
<dbReference type="PDB" id="5NWY">
    <property type="method" value="EM"/>
    <property type="resolution" value="2.93 A"/>
    <property type="chains" value="W=1-142"/>
</dbReference>
<dbReference type="PDB" id="5O2R">
    <property type="method" value="EM"/>
    <property type="resolution" value="3.40 A"/>
    <property type="chains" value="J=1-142"/>
</dbReference>
<dbReference type="PDB" id="5U4I">
    <property type="method" value="EM"/>
    <property type="resolution" value="3.50 A"/>
    <property type="chains" value="K=1-142"/>
</dbReference>
<dbReference type="PDB" id="5U9F">
    <property type="method" value="EM"/>
    <property type="resolution" value="3.20 A"/>
    <property type="chains" value="12=1-142"/>
</dbReference>
<dbReference type="PDB" id="5U9G">
    <property type="method" value="EM"/>
    <property type="resolution" value="3.20 A"/>
    <property type="chains" value="12=1-142"/>
</dbReference>
<dbReference type="PDB" id="5UYK">
    <property type="method" value="EM"/>
    <property type="resolution" value="3.90 A"/>
    <property type="chains" value="12=1-142"/>
</dbReference>
<dbReference type="PDB" id="5UYL">
    <property type="method" value="EM"/>
    <property type="resolution" value="3.60 A"/>
    <property type="chains" value="12=1-142"/>
</dbReference>
<dbReference type="PDB" id="5UYM">
    <property type="method" value="EM"/>
    <property type="resolution" value="3.20 A"/>
    <property type="chains" value="12=1-142"/>
</dbReference>
<dbReference type="PDB" id="5UYN">
    <property type="method" value="EM"/>
    <property type="resolution" value="4.00 A"/>
    <property type="chains" value="12=1-142"/>
</dbReference>
<dbReference type="PDB" id="5UYP">
    <property type="method" value="EM"/>
    <property type="resolution" value="3.90 A"/>
    <property type="chains" value="12=1-142"/>
</dbReference>
<dbReference type="PDB" id="5UYQ">
    <property type="method" value="EM"/>
    <property type="resolution" value="3.80 A"/>
    <property type="chains" value="12=1-142"/>
</dbReference>
<dbReference type="PDB" id="5WDT">
    <property type="method" value="EM"/>
    <property type="resolution" value="3.00 A"/>
    <property type="chains" value="J=1-141"/>
</dbReference>
<dbReference type="PDB" id="5WE4">
    <property type="method" value="EM"/>
    <property type="resolution" value="3.10 A"/>
    <property type="chains" value="J=1-141"/>
</dbReference>
<dbReference type="PDB" id="5WE6">
    <property type="method" value="EM"/>
    <property type="resolution" value="3.40 A"/>
    <property type="chains" value="J=1-141"/>
</dbReference>
<dbReference type="PDB" id="5WF0">
    <property type="method" value="EM"/>
    <property type="resolution" value="3.60 A"/>
    <property type="chains" value="J=1-141"/>
</dbReference>
<dbReference type="PDB" id="5WFK">
    <property type="method" value="EM"/>
    <property type="resolution" value="3.40 A"/>
    <property type="chains" value="J=1-141"/>
</dbReference>
<dbReference type="PDB" id="5WFS">
    <property type="method" value="EM"/>
    <property type="resolution" value="3.00 A"/>
    <property type="chains" value="J=1-141"/>
</dbReference>
<dbReference type="PDB" id="6BU8">
    <property type="method" value="EM"/>
    <property type="resolution" value="3.50 A"/>
    <property type="chains" value="12=1-142"/>
</dbReference>
<dbReference type="PDB" id="6BY1">
    <property type="method" value="X-ray"/>
    <property type="resolution" value="3.94 A"/>
    <property type="chains" value="CJ/DJ=1-142"/>
</dbReference>
<dbReference type="PDB" id="6C4I">
    <property type="method" value="EM"/>
    <property type="resolution" value="3.24 A"/>
    <property type="chains" value="K=1-142"/>
</dbReference>
<dbReference type="PDB" id="6DNC">
    <property type="method" value="EM"/>
    <property type="resolution" value="3.70 A"/>
    <property type="chains" value="N=1-142"/>
</dbReference>
<dbReference type="PDB" id="6ENF">
    <property type="method" value="EM"/>
    <property type="resolution" value="3.20 A"/>
    <property type="chains" value="J=1-142"/>
</dbReference>
<dbReference type="PDB" id="6ENJ">
    <property type="method" value="EM"/>
    <property type="resolution" value="3.70 A"/>
    <property type="chains" value="J=1-142"/>
</dbReference>
<dbReference type="PDB" id="6ENU">
    <property type="method" value="EM"/>
    <property type="resolution" value="3.10 A"/>
    <property type="chains" value="J=1-142"/>
</dbReference>
<dbReference type="PDB" id="6GBZ">
    <property type="method" value="EM"/>
    <property type="resolution" value="3.80 A"/>
    <property type="chains" value="J=1-142"/>
</dbReference>
<dbReference type="PDB" id="6GC0">
    <property type="method" value="EM"/>
    <property type="resolution" value="3.80 A"/>
    <property type="chains" value="J=1-142"/>
</dbReference>
<dbReference type="PDB" id="6GC4">
    <property type="method" value="EM"/>
    <property type="resolution" value="4.30 A"/>
    <property type="chains" value="J=1-142"/>
</dbReference>
<dbReference type="PDB" id="6GC6">
    <property type="method" value="EM"/>
    <property type="resolution" value="4.30 A"/>
    <property type="chains" value="J=1-142"/>
</dbReference>
<dbReference type="PDB" id="6GC7">
    <property type="method" value="EM"/>
    <property type="resolution" value="4.30 A"/>
    <property type="chains" value="J=1-142"/>
</dbReference>
<dbReference type="PDB" id="6GC8">
    <property type="method" value="EM"/>
    <property type="resolution" value="3.80 A"/>
    <property type="chains" value="J=1-142"/>
</dbReference>
<dbReference type="PDB" id="6GWT">
    <property type="method" value="EM"/>
    <property type="resolution" value="3.80 A"/>
    <property type="chains" value="J=1-142"/>
</dbReference>
<dbReference type="PDB" id="6GXM">
    <property type="method" value="EM"/>
    <property type="resolution" value="3.80 A"/>
    <property type="chains" value="J=1-142"/>
</dbReference>
<dbReference type="PDB" id="6GXN">
    <property type="method" value="EM"/>
    <property type="resolution" value="3.90 A"/>
    <property type="chains" value="J=1-142"/>
</dbReference>
<dbReference type="PDB" id="6GXO">
    <property type="method" value="EM"/>
    <property type="resolution" value="3.90 A"/>
    <property type="chains" value="J=1-142"/>
</dbReference>
<dbReference type="PDB" id="6GXP">
    <property type="method" value="EM"/>
    <property type="resolution" value="4.40 A"/>
    <property type="chains" value="J=1-142"/>
</dbReference>
<dbReference type="PDB" id="6H4N">
    <property type="method" value="EM"/>
    <property type="resolution" value="3.00 A"/>
    <property type="chains" value="J=1-142"/>
</dbReference>
<dbReference type="PDB" id="6H58">
    <property type="method" value="EM"/>
    <property type="resolution" value="7.90 A"/>
    <property type="chains" value="J/JJ=1-142"/>
</dbReference>
<dbReference type="PDB" id="6HRM">
    <property type="method" value="EM"/>
    <property type="resolution" value="2.96 A"/>
    <property type="chains" value="J=1-142"/>
</dbReference>
<dbReference type="PDB" id="6I0Y">
    <property type="method" value="EM"/>
    <property type="resolution" value="3.20 A"/>
    <property type="chains" value="J=1-142"/>
</dbReference>
<dbReference type="PDB" id="6I7V">
    <property type="method" value="X-ray"/>
    <property type="resolution" value="2.90 A"/>
    <property type="chains" value="CK/DK=1-142"/>
</dbReference>
<dbReference type="PDB" id="6O9J">
    <property type="method" value="EM"/>
    <property type="resolution" value="3.90 A"/>
    <property type="chains" value="J=1-140"/>
</dbReference>
<dbReference type="PDB" id="6O9K">
    <property type="method" value="EM"/>
    <property type="resolution" value="4.00 A"/>
    <property type="chains" value="J=1-142"/>
</dbReference>
<dbReference type="PDB" id="6OFX">
    <property type="method" value="EM"/>
    <property type="resolution" value="3.30 A"/>
    <property type="chains" value="j=1-142"/>
</dbReference>
<dbReference type="PDB" id="6OG7">
    <property type="method" value="EM"/>
    <property type="resolution" value="3.30 A"/>
    <property type="chains" value="j=1-142"/>
</dbReference>
<dbReference type="PDB" id="6OGF">
    <property type="method" value="EM"/>
    <property type="resolution" value="3.90 A"/>
    <property type="chains" value="j=1-142"/>
</dbReference>
<dbReference type="PDB" id="6OGG">
    <property type="method" value="EM"/>
    <property type="resolution" value="4.20 A"/>
    <property type="chains" value="j=1-142"/>
</dbReference>
<dbReference type="PDB" id="6OGI">
    <property type="method" value="EM"/>
    <property type="resolution" value="3.40 A"/>
    <property type="chains" value="j=1-142"/>
</dbReference>
<dbReference type="PDB" id="6OM6">
    <property type="method" value="EM"/>
    <property type="resolution" value="3.10 A"/>
    <property type="chains" value="J=1-142"/>
</dbReference>
<dbReference type="PDB" id="6ORE">
    <property type="method" value="EM"/>
    <property type="resolution" value="2.90 A"/>
    <property type="chains" value="J=1-142"/>
</dbReference>
<dbReference type="PDB" id="6ORL">
    <property type="method" value="EM"/>
    <property type="resolution" value="3.50 A"/>
    <property type="chains" value="J=1-142"/>
</dbReference>
<dbReference type="PDB" id="6OSK">
    <property type="method" value="EM"/>
    <property type="resolution" value="3.60 A"/>
    <property type="chains" value="J=1-142"/>
</dbReference>
<dbReference type="PDB" id="6OSQ">
    <property type="method" value="EM"/>
    <property type="resolution" value="3.50 A"/>
    <property type="chains" value="J=1-142"/>
</dbReference>
<dbReference type="PDB" id="6OST">
    <property type="method" value="EM"/>
    <property type="resolution" value="4.20 A"/>
    <property type="chains" value="J=1-142"/>
</dbReference>
<dbReference type="PDB" id="6OT3">
    <property type="method" value="EM"/>
    <property type="resolution" value="3.90 A"/>
    <property type="chains" value="J=1-142"/>
</dbReference>
<dbReference type="PDB" id="6OUO">
    <property type="method" value="EM"/>
    <property type="resolution" value="3.70 A"/>
    <property type="chains" value="J=1-142"/>
</dbReference>
<dbReference type="PDB" id="6PC5">
    <property type="method" value="EM"/>
    <property type="resolution" value="2.70 A"/>
    <property type="chains" value="O=1-142"/>
</dbReference>
<dbReference type="PDB" id="6PC6">
    <property type="method" value="EM"/>
    <property type="resolution" value="2.50 A"/>
    <property type="chains" value="O=1-142"/>
</dbReference>
<dbReference type="PDB" id="6PC7">
    <property type="method" value="EM"/>
    <property type="resolution" value="2.50 A"/>
    <property type="chains" value="O=1-142"/>
</dbReference>
<dbReference type="PDB" id="6PC8">
    <property type="method" value="EM"/>
    <property type="resolution" value="2.90 A"/>
    <property type="chains" value="O=1-142"/>
</dbReference>
<dbReference type="PDB" id="6PCH">
    <property type="method" value="EM"/>
    <property type="resolution" value="2.90 A"/>
    <property type="chains" value="O=1-142"/>
</dbReference>
<dbReference type="PDB" id="6PCQ">
    <property type="method" value="EM"/>
    <property type="resolution" value="2.60 A"/>
    <property type="chains" value="O=1-142"/>
</dbReference>
<dbReference type="PDB" id="6PCR">
    <property type="method" value="EM"/>
    <property type="resolution" value="2.50 A"/>
    <property type="chains" value="O=1-142"/>
</dbReference>
<dbReference type="PDB" id="6PCS">
    <property type="method" value="EM"/>
    <property type="resolution" value="2.80 A"/>
    <property type="chains" value="O=1-142"/>
</dbReference>
<dbReference type="PDB" id="6PCT">
    <property type="method" value="EM"/>
    <property type="resolution" value="2.80 A"/>
    <property type="chains" value="O=1-142"/>
</dbReference>
<dbReference type="PDB" id="6PJ6">
    <property type="method" value="EM"/>
    <property type="resolution" value="2.20 A"/>
    <property type="chains" value="R=1-142"/>
</dbReference>
<dbReference type="PDB" id="6Q98">
    <property type="method" value="EM"/>
    <property type="resolution" value="4.30 A"/>
    <property type="chains" value="J=1-142"/>
</dbReference>
<dbReference type="PDB" id="6Q9A">
    <property type="method" value="EM"/>
    <property type="resolution" value="3.70 A"/>
    <property type="chains" value="J=1-142"/>
</dbReference>
<dbReference type="PDB" id="6QDW">
    <property type="method" value="EM"/>
    <property type="resolution" value="2.83 A"/>
    <property type="chains" value="j=1-142"/>
</dbReference>
<dbReference type="PDB" id="6QUL">
    <property type="method" value="EM"/>
    <property type="resolution" value="3.00 A"/>
    <property type="chains" value="K=1-142"/>
</dbReference>
<dbReference type="PDB" id="6S0K">
    <property type="method" value="EM"/>
    <property type="resolution" value="3.10 A"/>
    <property type="chains" value="K=1-142"/>
</dbReference>
<dbReference type="PDB" id="6SZS">
    <property type="method" value="EM"/>
    <property type="resolution" value="3.06 A"/>
    <property type="chains" value="J=1-142"/>
</dbReference>
<dbReference type="PDB" id="6TBV">
    <property type="method" value="EM"/>
    <property type="resolution" value="2.70 A"/>
    <property type="chains" value="L131=1-142"/>
</dbReference>
<dbReference type="PDB" id="6TC3">
    <property type="method" value="EM"/>
    <property type="resolution" value="2.70 A"/>
    <property type="chains" value="L131=1-142"/>
</dbReference>
<dbReference type="PDB" id="6U48">
    <property type="method" value="EM"/>
    <property type="resolution" value="2.87 A"/>
    <property type="chains" value="CK=1-142"/>
</dbReference>
<dbReference type="PDB" id="6VU3">
    <property type="method" value="EM"/>
    <property type="resolution" value="3.70 A"/>
    <property type="chains" value="s=1-142"/>
</dbReference>
<dbReference type="PDB" id="6VWL">
    <property type="method" value="EM"/>
    <property type="resolution" value="3.10 A"/>
    <property type="chains" value="G=1-142"/>
</dbReference>
<dbReference type="PDB" id="6VWM">
    <property type="method" value="EM"/>
    <property type="resolution" value="3.40 A"/>
    <property type="chains" value="H=1-142"/>
</dbReference>
<dbReference type="PDB" id="6VWN">
    <property type="method" value="EM"/>
    <property type="resolution" value="3.40 A"/>
    <property type="chains" value="G=1-142"/>
</dbReference>
<dbReference type="PDB" id="6VYQ">
    <property type="method" value="EM"/>
    <property type="resolution" value="3.70 A"/>
    <property type="chains" value="s=1-142"/>
</dbReference>
<dbReference type="PDB" id="6VYR">
    <property type="method" value="EM"/>
    <property type="resolution" value="3.80 A"/>
    <property type="chains" value="s=1-142"/>
</dbReference>
<dbReference type="PDB" id="6VYS">
    <property type="method" value="EM"/>
    <property type="resolution" value="3.70 A"/>
    <property type="chains" value="s=1-142"/>
</dbReference>
<dbReference type="PDB" id="6VYT">
    <property type="method" value="EM"/>
    <property type="resolution" value="14.00 A"/>
    <property type="chains" value="s=1-142"/>
</dbReference>
<dbReference type="PDB" id="6VYU">
    <property type="method" value="EM"/>
    <property type="resolution" value="7.00 A"/>
    <property type="chains" value="s=1-142"/>
</dbReference>
<dbReference type="PDB" id="6VYW">
    <property type="method" value="EM"/>
    <property type="resolution" value="7.00 A"/>
    <property type="chains" value="s=1-142"/>
</dbReference>
<dbReference type="PDB" id="6VYX">
    <property type="method" value="EM"/>
    <property type="resolution" value="9.90 A"/>
    <property type="chains" value="s=1-142"/>
</dbReference>
<dbReference type="PDB" id="6VYY">
    <property type="method" value="EM"/>
    <property type="resolution" value="9.90 A"/>
    <property type="chains" value="s=1-142"/>
</dbReference>
<dbReference type="PDB" id="6VYZ">
    <property type="method" value="EM"/>
    <property type="resolution" value="9.90 A"/>
    <property type="chains" value="s=1-142"/>
</dbReference>
<dbReference type="PDB" id="6VZ2">
    <property type="method" value="EM"/>
    <property type="resolution" value="10.00 A"/>
    <property type="chains" value="s=1-142"/>
</dbReference>
<dbReference type="PDB" id="6VZ3">
    <property type="method" value="EM"/>
    <property type="resolution" value="8.90 A"/>
    <property type="chains" value="s=1-142"/>
</dbReference>
<dbReference type="PDB" id="6VZ5">
    <property type="method" value="EM"/>
    <property type="resolution" value="8.90 A"/>
    <property type="chains" value="s=1-142"/>
</dbReference>
<dbReference type="PDB" id="6VZ7">
    <property type="method" value="EM"/>
    <property type="resolution" value="7.00 A"/>
    <property type="chains" value="s=1-142"/>
</dbReference>
<dbReference type="PDB" id="6VZJ">
    <property type="method" value="EM"/>
    <property type="resolution" value="4.10 A"/>
    <property type="chains" value="s=1-142"/>
</dbReference>
<dbReference type="PDB" id="6WD0">
    <property type="method" value="EM"/>
    <property type="resolution" value="3.00 A"/>
    <property type="chains" value="j=1-142"/>
</dbReference>
<dbReference type="PDB" id="6WD1">
    <property type="method" value="EM"/>
    <property type="resolution" value="3.30 A"/>
    <property type="chains" value="j=1-142"/>
</dbReference>
<dbReference type="PDB" id="6WD2">
    <property type="method" value="EM"/>
    <property type="resolution" value="3.60 A"/>
    <property type="chains" value="j=1-142"/>
</dbReference>
<dbReference type="PDB" id="6WD3">
    <property type="method" value="EM"/>
    <property type="resolution" value="3.60 A"/>
    <property type="chains" value="j=1-142"/>
</dbReference>
<dbReference type="PDB" id="6WD4">
    <property type="method" value="EM"/>
    <property type="resolution" value="3.70 A"/>
    <property type="chains" value="j=1-142"/>
</dbReference>
<dbReference type="PDB" id="6WD5">
    <property type="method" value="EM"/>
    <property type="resolution" value="3.60 A"/>
    <property type="chains" value="j=1-142"/>
</dbReference>
<dbReference type="PDB" id="6WD6">
    <property type="method" value="EM"/>
    <property type="resolution" value="3.70 A"/>
    <property type="chains" value="j=1-142"/>
</dbReference>
<dbReference type="PDB" id="6WD7">
    <property type="method" value="EM"/>
    <property type="resolution" value="3.90 A"/>
    <property type="chains" value="j=1-142"/>
</dbReference>
<dbReference type="PDB" id="6WD8">
    <property type="method" value="EM"/>
    <property type="resolution" value="3.70 A"/>
    <property type="chains" value="j=1-142"/>
</dbReference>
<dbReference type="PDB" id="6WD9">
    <property type="method" value="EM"/>
    <property type="resolution" value="3.70 A"/>
    <property type="chains" value="j=1-142"/>
</dbReference>
<dbReference type="PDB" id="6WDA">
    <property type="method" value="EM"/>
    <property type="resolution" value="3.80 A"/>
    <property type="chains" value="j=1-142"/>
</dbReference>
<dbReference type="PDB" id="6WDB">
    <property type="method" value="EM"/>
    <property type="resolution" value="4.00 A"/>
    <property type="chains" value="j=1-142"/>
</dbReference>
<dbReference type="PDB" id="6WDC">
    <property type="method" value="EM"/>
    <property type="resolution" value="4.20 A"/>
    <property type="chains" value="j=1-142"/>
</dbReference>
<dbReference type="PDB" id="6WDD">
    <property type="method" value="EM"/>
    <property type="resolution" value="3.20 A"/>
    <property type="chains" value="j=1-142"/>
</dbReference>
<dbReference type="PDB" id="6WDE">
    <property type="method" value="EM"/>
    <property type="resolution" value="3.00 A"/>
    <property type="chains" value="j=1-142"/>
</dbReference>
<dbReference type="PDB" id="6WDF">
    <property type="method" value="EM"/>
    <property type="resolution" value="3.30 A"/>
    <property type="chains" value="j=1-142"/>
</dbReference>
<dbReference type="PDB" id="6WDG">
    <property type="method" value="EM"/>
    <property type="resolution" value="3.30 A"/>
    <property type="chains" value="j=1-142"/>
</dbReference>
<dbReference type="PDB" id="6WDH">
    <property type="method" value="EM"/>
    <property type="resolution" value="4.30 A"/>
    <property type="chains" value="j=1-142"/>
</dbReference>
<dbReference type="PDB" id="6WDI">
    <property type="method" value="EM"/>
    <property type="resolution" value="4.00 A"/>
    <property type="chains" value="j=1-142"/>
</dbReference>
<dbReference type="PDB" id="6WDJ">
    <property type="method" value="EM"/>
    <property type="resolution" value="3.70 A"/>
    <property type="chains" value="j=1-142"/>
</dbReference>
<dbReference type="PDB" id="6WDK">
    <property type="method" value="EM"/>
    <property type="resolution" value="3.60 A"/>
    <property type="chains" value="j=1-142"/>
</dbReference>
<dbReference type="PDB" id="6WDL">
    <property type="method" value="EM"/>
    <property type="resolution" value="3.70 A"/>
    <property type="chains" value="j=1-142"/>
</dbReference>
<dbReference type="PDB" id="6WDM">
    <property type="method" value="EM"/>
    <property type="resolution" value="3.60 A"/>
    <property type="chains" value="j=1-142"/>
</dbReference>
<dbReference type="PDB" id="6WNT">
    <property type="method" value="EM"/>
    <property type="resolution" value="3.10 A"/>
    <property type="chains" value="j=1-142"/>
</dbReference>
<dbReference type="PDB" id="6WNV">
    <property type="method" value="EM"/>
    <property type="resolution" value="3.50 A"/>
    <property type="chains" value="j=1-142"/>
</dbReference>
<dbReference type="PDB" id="6WNW">
    <property type="method" value="EM"/>
    <property type="resolution" value="3.20 A"/>
    <property type="chains" value="j=1-142"/>
</dbReference>
<dbReference type="PDB" id="6WYV">
    <property type="method" value="EM"/>
    <property type="resolution" value="2.75 A"/>
    <property type="chains" value="O=1-142"/>
</dbReference>
<dbReference type="PDB" id="6X6T">
    <property type="method" value="EM"/>
    <property type="resolution" value="3.20 A"/>
    <property type="chains" value="s=1-142"/>
</dbReference>
<dbReference type="PDB" id="6X7F">
    <property type="method" value="EM"/>
    <property type="resolution" value="3.50 A"/>
    <property type="chains" value="s=1-142"/>
</dbReference>
<dbReference type="PDB" id="6X7K">
    <property type="method" value="EM"/>
    <property type="resolution" value="3.10 A"/>
    <property type="chains" value="s=1-142"/>
</dbReference>
<dbReference type="PDB" id="6X9Q">
    <property type="method" value="EM"/>
    <property type="resolution" value="4.80 A"/>
    <property type="chains" value="s=1-142"/>
</dbReference>
<dbReference type="PDB" id="6XDQ">
    <property type="method" value="EM"/>
    <property type="resolution" value="3.70 A"/>
    <property type="chains" value="s=1-142"/>
</dbReference>
<dbReference type="PDB" id="6XDR">
    <property type="method" value="EM"/>
    <property type="resolution" value="4.70 A"/>
    <property type="chains" value="s=1-142"/>
</dbReference>
<dbReference type="PDB" id="6XGF">
    <property type="method" value="EM"/>
    <property type="resolution" value="5.00 A"/>
    <property type="chains" value="s=1-142"/>
</dbReference>
<dbReference type="PDB" id="6XII">
    <property type="method" value="EM"/>
    <property type="resolution" value="7.00 A"/>
    <property type="chains" value="s=1-142"/>
</dbReference>
<dbReference type="PDB" id="6XIJ">
    <property type="method" value="EM"/>
    <property type="resolution" value="8.00 A"/>
    <property type="chains" value="s=1-142"/>
</dbReference>
<dbReference type="PDB" id="6XZ7">
    <property type="method" value="EM"/>
    <property type="resolution" value="2.10 A"/>
    <property type="chains" value="J=1-142"/>
</dbReference>
<dbReference type="PDB" id="6XZA">
    <property type="method" value="EM"/>
    <property type="resolution" value="2.66 A"/>
    <property type="chains" value="J2=1-142"/>
</dbReference>
<dbReference type="PDB" id="6XZB">
    <property type="method" value="EM"/>
    <property type="resolution" value="2.54 A"/>
    <property type="chains" value="J2=1-142"/>
</dbReference>
<dbReference type="PDB" id="6Y69">
    <property type="method" value="EM"/>
    <property type="resolution" value="2.86 A"/>
    <property type="chains" value="J=1-142"/>
</dbReference>
<dbReference type="PDB" id="6YS3">
    <property type="method" value="EM"/>
    <property type="resolution" value="2.58 A"/>
    <property type="chains" value="j=1-142"/>
</dbReference>
<dbReference type="PDB" id="6YSR">
    <property type="method" value="EM"/>
    <property type="resolution" value="3.10 A"/>
    <property type="chains" value="J=1-142"/>
</dbReference>
<dbReference type="PDB" id="6YSS">
    <property type="method" value="EM"/>
    <property type="resolution" value="2.60 A"/>
    <property type="chains" value="J=1-142"/>
</dbReference>
<dbReference type="PDB" id="6YST">
    <property type="method" value="EM"/>
    <property type="resolution" value="3.20 A"/>
    <property type="chains" value="J=1-142"/>
</dbReference>
<dbReference type="PDB" id="6YSU">
    <property type="method" value="EM"/>
    <property type="resolution" value="3.70 A"/>
    <property type="chains" value="J=1-142"/>
</dbReference>
<dbReference type="PDB" id="6ZTJ">
    <property type="method" value="EM"/>
    <property type="resolution" value="3.40 A"/>
    <property type="chains" value="BK=1-142"/>
</dbReference>
<dbReference type="PDB" id="6ZTL">
    <property type="method" value="EM"/>
    <property type="resolution" value="3.50 A"/>
    <property type="chains" value="BK=1-142"/>
</dbReference>
<dbReference type="PDB" id="6ZTM">
    <property type="method" value="EM"/>
    <property type="resolution" value="3.30 A"/>
    <property type="chains" value="BK=1-142"/>
</dbReference>
<dbReference type="PDB" id="6ZTN">
    <property type="method" value="EM"/>
    <property type="resolution" value="3.90 A"/>
    <property type="chains" value="BK=1-142"/>
</dbReference>
<dbReference type="PDB" id="6ZTO">
    <property type="method" value="EM"/>
    <property type="resolution" value="3.00 A"/>
    <property type="chains" value="BK=1-142"/>
</dbReference>
<dbReference type="PDB" id="6ZTP">
    <property type="method" value="EM"/>
    <property type="resolution" value="3.00 A"/>
    <property type="chains" value="BK=1-142"/>
</dbReference>
<dbReference type="PDB" id="6ZU1">
    <property type="method" value="EM"/>
    <property type="resolution" value="3.00 A"/>
    <property type="chains" value="BK=1-142"/>
</dbReference>
<dbReference type="PDB" id="7ABZ">
    <property type="method" value="EM"/>
    <property type="resolution" value="3.21 A"/>
    <property type="chains" value="J=1-142"/>
</dbReference>
<dbReference type="PDB" id="7AC7">
    <property type="method" value="EM"/>
    <property type="resolution" value="3.08 A"/>
    <property type="chains" value="J=2-142"/>
</dbReference>
<dbReference type="PDB" id="7ACJ">
    <property type="method" value="EM"/>
    <property type="resolution" value="3.20 A"/>
    <property type="chains" value="J=1-142"/>
</dbReference>
<dbReference type="PDB" id="7ACR">
    <property type="method" value="EM"/>
    <property type="resolution" value="3.44 A"/>
    <property type="chains" value="J=1-142"/>
</dbReference>
<dbReference type="PDB" id="7B5K">
    <property type="method" value="EM"/>
    <property type="resolution" value="2.90 A"/>
    <property type="chains" value="J=1-142"/>
</dbReference>
<dbReference type="PDB" id="7BL2">
    <property type="method" value="EM"/>
    <property type="resolution" value="3.70 A"/>
    <property type="chains" value="J=1-142"/>
</dbReference>
<dbReference type="PDB" id="7BL3">
    <property type="method" value="EM"/>
    <property type="resolution" value="3.50 A"/>
    <property type="chains" value="J=1-142"/>
</dbReference>
<dbReference type="PDB" id="7BL4">
    <property type="method" value="EM"/>
    <property type="resolution" value="2.40 A"/>
    <property type="chains" value="J=1-142"/>
</dbReference>
<dbReference type="PDB" id="7BL5">
    <property type="method" value="EM"/>
    <property type="resolution" value="3.30 A"/>
    <property type="chains" value="J=1-142"/>
</dbReference>
<dbReference type="PDB" id="7BL6">
    <property type="method" value="EM"/>
    <property type="resolution" value="4.00 A"/>
    <property type="chains" value="J=1-142"/>
</dbReference>
<dbReference type="PDB" id="7BV8">
    <property type="method" value="EM"/>
    <property type="resolution" value="3.14 A"/>
    <property type="chains" value="K=1-142"/>
</dbReference>
<dbReference type="PDB" id="7D6Z">
    <property type="method" value="EM"/>
    <property type="resolution" value="3.40 A"/>
    <property type="chains" value="J=1-142"/>
</dbReference>
<dbReference type="PDB" id="7D80">
    <property type="method" value="EM"/>
    <property type="resolution" value="4.10 A"/>
    <property type="chains" value="i=1-142"/>
</dbReference>
<dbReference type="PDB" id="7JSS">
    <property type="method" value="EM"/>
    <property type="resolution" value="3.70 A"/>
    <property type="chains" value="j=1-142"/>
</dbReference>
<dbReference type="PDB" id="7JSW">
    <property type="method" value="EM"/>
    <property type="resolution" value="3.80 A"/>
    <property type="chains" value="j=1-142"/>
</dbReference>
<dbReference type="PDB" id="7JSZ">
    <property type="method" value="EM"/>
    <property type="resolution" value="3.70 A"/>
    <property type="chains" value="j=1-142"/>
</dbReference>
<dbReference type="PDB" id="7JT1">
    <property type="method" value="EM"/>
    <property type="resolution" value="3.30 A"/>
    <property type="chains" value="j=1-142"/>
</dbReference>
<dbReference type="PDB" id="7JT2">
    <property type="method" value="EM"/>
    <property type="resolution" value="3.50 A"/>
    <property type="chains" value="j=1-142"/>
</dbReference>
<dbReference type="PDB" id="7JT3">
    <property type="method" value="EM"/>
    <property type="resolution" value="3.70 A"/>
    <property type="chains" value="j=1-142"/>
</dbReference>
<dbReference type="PDB" id="7K00">
    <property type="method" value="EM"/>
    <property type="resolution" value="1.98 A"/>
    <property type="chains" value="i=1-142"/>
</dbReference>
<dbReference type="PDB" id="7K50">
    <property type="method" value="EM"/>
    <property type="resolution" value="3.40 A"/>
    <property type="chains" value="j=1-142"/>
</dbReference>
<dbReference type="PDB" id="7K51">
    <property type="method" value="EM"/>
    <property type="resolution" value="3.50 A"/>
    <property type="chains" value="j=1-142"/>
</dbReference>
<dbReference type="PDB" id="7K52">
    <property type="method" value="EM"/>
    <property type="resolution" value="3.40 A"/>
    <property type="chains" value="j=1-142"/>
</dbReference>
<dbReference type="PDB" id="7K53">
    <property type="method" value="EM"/>
    <property type="resolution" value="3.20 A"/>
    <property type="chains" value="j=1-142"/>
</dbReference>
<dbReference type="PDB" id="7K54">
    <property type="method" value="EM"/>
    <property type="resolution" value="3.20 A"/>
    <property type="chains" value="j=1-142"/>
</dbReference>
<dbReference type="PDB" id="7K55">
    <property type="method" value="EM"/>
    <property type="resolution" value="3.30 A"/>
    <property type="chains" value="j=1-142"/>
</dbReference>
<dbReference type="PDB" id="7LV0">
    <property type="method" value="EM"/>
    <property type="resolution" value="3.20 A"/>
    <property type="chains" value="j=1-142"/>
</dbReference>
<dbReference type="PDB" id="7LVK">
    <property type="method" value="EM"/>
    <property type="resolution" value="2.20 A"/>
    <property type="chains" value="R=1-142"/>
</dbReference>
<dbReference type="PDB" id="7M5D">
    <property type="method" value="EM"/>
    <property type="resolution" value="2.80 A"/>
    <property type="chains" value="J=1-142"/>
</dbReference>
<dbReference type="PDB" id="7N1P">
    <property type="method" value="EM"/>
    <property type="resolution" value="2.33 A"/>
    <property type="chains" value="LM=1-142"/>
</dbReference>
<dbReference type="PDB" id="7N2C">
    <property type="method" value="EM"/>
    <property type="resolution" value="2.72 A"/>
    <property type="chains" value="LM=1-142"/>
</dbReference>
<dbReference type="PDB" id="7N2U">
    <property type="method" value="EM"/>
    <property type="resolution" value="2.53 A"/>
    <property type="chains" value="LM=1-142"/>
</dbReference>
<dbReference type="PDB" id="7N2V">
    <property type="method" value="EM"/>
    <property type="resolution" value="2.54 A"/>
    <property type="chains" value="LM=1-142"/>
</dbReference>
<dbReference type="PDB" id="7N30">
    <property type="method" value="EM"/>
    <property type="resolution" value="2.66 A"/>
    <property type="chains" value="LM=1-142"/>
</dbReference>
<dbReference type="PDB" id="7N31">
    <property type="method" value="EM"/>
    <property type="resolution" value="2.69 A"/>
    <property type="chains" value="LM=1-142"/>
</dbReference>
<dbReference type="PDB" id="7NBU">
    <property type="method" value="EM"/>
    <property type="resolution" value="3.11 A"/>
    <property type="chains" value="i=1-142"/>
</dbReference>
<dbReference type="PDB" id="7NSO">
    <property type="method" value="EM"/>
    <property type="resolution" value="2.90 A"/>
    <property type="chains" value="J=1-142"/>
</dbReference>
<dbReference type="PDB" id="7NSP">
    <property type="method" value="EM"/>
    <property type="resolution" value="3.50 A"/>
    <property type="chains" value="J=1-142"/>
</dbReference>
<dbReference type="PDB" id="7NSQ">
    <property type="method" value="EM"/>
    <property type="resolution" value="3.10 A"/>
    <property type="chains" value="J=1-142"/>
</dbReference>
<dbReference type="PDB" id="7NWT">
    <property type="method" value="EM"/>
    <property type="resolution" value="2.66 A"/>
    <property type="chains" value="J=1-142"/>
</dbReference>
<dbReference type="PDB" id="7NWW">
    <property type="method" value="EM"/>
    <property type="resolution" value="3.05 A"/>
    <property type="chains" value="I=1-142"/>
</dbReference>
<dbReference type="PDB" id="7O19">
    <property type="method" value="EM"/>
    <property type="resolution" value="2.90 A"/>
    <property type="chains" value="BJ=1-142"/>
</dbReference>
<dbReference type="PDB" id="7O1A">
    <property type="method" value="EM"/>
    <property type="resolution" value="2.40 A"/>
    <property type="chains" value="BJ=1-142"/>
</dbReference>
<dbReference type="PDB" id="7O1C">
    <property type="method" value="EM"/>
    <property type="resolution" value="2.60 A"/>
    <property type="chains" value="BJ=1-142"/>
</dbReference>
<dbReference type="PDB" id="7ODE">
    <property type="method" value="EM"/>
    <property type="resolution" value="2.84 A"/>
    <property type="chains" value="R=1-142"/>
</dbReference>
<dbReference type="PDB" id="7OIF">
    <property type="method" value="EM"/>
    <property type="resolution" value="3.00 A"/>
    <property type="chains" value="I=1-142"/>
</dbReference>
<dbReference type="PDB" id="7OIG">
    <property type="method" value="EM"/>
    <property type="resolution" value="3.20 A"/>
    <property type="chains" value="I=1-142"/>
</dbReference>
<dbReference type="PDB" id="7OII">
    <property type="method" value="EM"/>
    <property type="resolution" value="3.00 A"/>
    <property type="chains" value="I=1-142"/>
</dbReference>
<dbReference type="PDB" id="7OIZ">
    <property type="method" value="EM"/>
    <property type="resolution" value="2.90 A"/>
    <property type="chains" value="i=1-142"/>
</dbReference>
<dbReference type="PDB" id="7OJ0">
    <property type="method" value="EM"/>
    <property type="resolution" value="3.50 A"/>
    <property type="chains" value="i=1-142"/>
</dbReference>
<dbReference type="PDB" id="7OT5">
    <property type="method" value="EM"/>
    <property type="resolution" value="2.90 A"/>
    <property type="chains" value="I=1-142"/>
</dbReference>
<dbReference type="PDB" id="7P3K">
    <property type="method" value="EM"/>
    <property type="resolution" value="2.90 A"/>
    <property type="chains" value="i=1-142"/>
</dbReference>
<dbReference type="PDB" id="7PJS">
    <property type="method" value="EM"/>
    <property type="resolution" value="2.35 A"/>
    <property type="chains" value="J=1-142"/>
</dbReference>
<dbReference type="PDB" id="7PJT">
    <property type="method" value="EM"/>
    <property type="resolution" value="6.00 A"/>
    <property type="chains" value="J=1-142"/>
</dbReference>
<dbReference type="PDB" id="7PJU">
    <property type="method" value="EM"/>
    <property type="resolution" value="9.50 A"/>
    <property type="chains" value="J=1-142"/>
</dbReference>
<dbReference type="PDB" id="7PJV">
    <property type="method" value="EM"/>
    <property type="resolution" value="3.10 A"/>
    <property type="chains" value="J=1-142"/>
</dbReference>
<dbReference type="PDB" id="7PJW">
    <property type="method" value="EM"/>
    <property type="resolution" value="4.00 A"/>
    <property type="chains" value="J=1-142"/>
</dbReference>
<dbReference type="PDB" id="7PJX">
    <property type="method" value="EM"/>
    <property type="resolution" value="6.50 A"/>
    <property type="chains" value="J=1-142"/>
</dbReference>
<dbReference type="PDB" id="7PJY">
    <property type="method" value="EM"/>
    <property type="resolution" value="3.10 A"/>
    <property type="chains" value="J=1-142"/>
</dbReference>
<dbReference type="PDB" id="7PJZ">
    <property type="method" value="EM"/>
    <property type="resolution" value="6.00 A"/>
    <property type="chains" value="J=1-142"/>
</dbReference>
<dbReference type="PDB" id="7Q4K">
    <property type="method" value="EM"/>
    <property type="resolution" value="3.00 A"/>
    <property type="chains" value="BJ=1-142"/>
</dbReference>
<dbReference type="PDB" id="7QG8">
    <property type="method" value="EM"/>
    <property type="resolution" value="3.97 A"/>
    <property type="chains" value="W=1-142"/>
</dbReference>
<dbReference type="PDB" id="7QGH">
    <property type="method" value="EM"/>
    <property type="resolution" value="4.48 A"/>
    <property type="chains" value="W=1-142"/>
</dbReference>
<dbReference type="PDB" id="7QGN">
    <property type="method" value="EM"/>
    <property type="resolution" value="3.37 A"/>
    <property type="chains" value="W=1-142"/>
</dbReference>
<dbReference type="PDB" id="7QGR">
    <property type="method" value="EM"/>
    <property type="resolution" value="5.70 A"/>
    <property type="chains" value="W=1-142"/>
</dbReference>
<dbReference type="PDB" id="7QQ3">
    <property type="method" value="EM"/>
    <property type="resolution" value="2.10 A"/>
    <property type="chains" value="R=1-142"/>
</dbReference>
<dbReference type="PDB" id="7S1G">
    <property type="method" value="EM"/>
    <property type="resolution" value="2.48 A"/>
    <property type="chains" value="R=1-142"/>
</dbReference>
<dbReference type="PDB" id="7S1H">
    <property type="method" value="EM"/>
    <property type="resolution" value="2.35 A"/>
    <property type="chains" value="R=1-142"/>
</dbReference>
<dbReference type="PDB" id="7S1I">
    <property type="method" value="EM"/>
    <property type="resolution" value="2.48 A"/>
    <property type="chains" value="R=1-142"/>
</dbReference>
<dbReference type="PDB" id="7S1J">
    <property type="method" value="EM"/>
    <property type="resolution" value="2.47 A"/>
    <property type="chains" value="R=1-142"/>
</dbReference>
<dbReference type="PDB" id="7S1K">
    <property type="method" value="EM"/>
    <property type="resolution" value="2.42 A"/>
    <property type="chains" value="R=1-142"/>
</dbReference>
<dbReference type="PDB" id="7SA4">
    <property type="method" value="EM"/>
    <property type="resolution" value="2.55 A"/>
    <property type="chains" value="J=1-142"/>
</dbReference>
<dbReference type="PDB" id="7SS9">
    <property type="method" value="EM"/>
    <property type="resolution" value="3.90 A"/>
    <property type="chains" value="j=1-142"/>
</dbReference>
<dbReference type="PDB" id="7SSD">
    <property type="method" value="EM"/>
    <property type="resolution" value="3.30 A"/>
    <property type="chains" value="j=1-142"/>
</dbReference>
<dbReference type="PDB" id="7SSL">
    <property type="method" value="EM"/>
    <property type="resolution" value="3.80 A"/>
    <property type="chains" value="j=1-142"/>
</dbReference>
<dbReference type="PDB" id="7SSN">
    <property type="method" value="EM"/>
    <property type="resolution" value="3.20 A"/>
    <property type="chains" value="j=1-142"/>
</dbReference>
<dbReference type="PDB" id="7SSO">
    <property type="method" value="EM"/>
    <property type="resolution" value="3.20 A"/>
    <property type="chains" value="j=1-142"/>
</dbReference>
<dbReference type="PDB" id="7SSW">
    <property type="method" value="EM"/>
    <property type="resolution" value="3.80 A"/>
    <property type="chains" value="j=1-142"/>
</dbReference>
<dbReference type="PDB" id="7ST2">
    <property type="method" value="EM"/>
    <property type="resolution" value="2.90 A"/>
    <property type="chains" value="j=1-142"/>
</dbReference>
<dbReference type="PDB" id="7ST6">
    <property type="method" value="EM"/>
    <property type="resolution" value="3.00 A"/>
    <property type="chains" value="j=1-142"/>
</dbReference>
<dbReference type="PDB" id="7ST7">
    <property type="method" value="EM"/>
    <property type="resolution" value="3.20 A"/>
    <property type="chains" value="j=1-142"/>
</dbReference>
<dbReference type="PDB" id="7TOS">
    <property type="method" value="EM"/>
    <property type="resolution" value="2.90 A"/>
    <property type="chains" value="L13=1-142"/>
</dbReference>
<dbReference type="PDB" id="7UG7">
    <property type="method" value="EM"/>
    <property type="resolution" value="2.58 A"/>
    <property type="chains" value="LM=1-142"/>
</dbReference>
<dbReference type="PDB" id="7UPH">
    <property type="method" value="EM"/>
    <property type="resolution" value="4.18 A"/>
    <property type="chains" value="R=1-142"/>
</dbReference>
<dbReference type="PDB" id="7Y7C">
    <property type="method" value="EM"/>
    <property type="resolution" value="2.51 A"/>
    <property type="chains" value="i=1-142"/>
</dbReference>
<dbReference type="PDB" id="7Y7D">
    <property type="method" value="EM"/>
    <property type="resolution" value="2.58 A"/>
    <property type="chains" value="i=1-142"/>
</dbReference>
<dbReference type="PDB" id="7Y7E">
    <property type="method" value="EM"/>
    <property type="resolution" value="2.41 A"/>
    <property type="chains" value="i=1-142"/>
</dbReference>
<dbReference type="PDB" id="7Y7F">
    <property type="method" value="EM"/>
    <property type="resolution" value="2.43 A"/>
    <property type="chains" value="i=1-142"/>
</dbReference>
<dbReference type="PDB" id="7Y7G">
    <property type="method" value="EM"/>
    <property type="resolution" value="2.34 A"/>
    <property type="chains" value="i=1-142"/>
</dbReference>
<dbReference type="PDB" id="7Y7H">
    <property type="method" value="EM"/>
    <property type="resolution" value="2.51 A"/>
    <property type="chains" value="i=1-142"/>
</dbReference>
<dbReference type="PDB" id="7YLA">
    <property type="method" value="EM"/>
    <property type="resolution" value="2.52 A"/>
    <property type="chains" value="R=1-142"/>
</dbReference>
<dbReference type="PDB" id="7Z20">
    <property type="method" value="EM"/>
    <property type="resolution" value="2.29 A"/>
    <property type="chains" value="j=1-142"/>
</dbReference>
<dbReference type="PDB" id="7ZOD">
    <property type="method" value="EM"/>
    <property type="resolution" value="2.56 A"/>
    <property type="chains" value="j=1-142"/>
</dbReference>
<dbReference type="PDB" id="7ZP8">
    <property type="method" value="EM"/>
    <property type="resolution" value="2.20 A"/>
    <property type="chains" value="j=1-142"/>
</dbReference>
<dbReference type="PDB" id="7ZQ5">
    <property type="method" value="EM"/>
    <property type="resolution" value="2.70 A"/>
    <property type="chains" value="j=1-142"/>
</dbReference>
<dbReference type="PDB" id="7ZQ6">
    <property type="method" value="EM"/>
    <property type="resolution" value="2.75 A"/>
    <property type="chains" value="j=1-142"/>
</dbReference>
<dbReference type="PDB" id="7ZTA">
    <property type="method" value="EM"/>
    <property type="resolution" value="2.70 A"/>
    <property type="chains" value="L131=1-142"/>
</dbReference>
<dbReference type="PDB" id="8A3L">
    <property type="method" value="EM"/>
    <property type="resolution" value="3.42 A"/>
    <property type="chains" value="i=1-142"/>
</dbReference>
<dbReference type="PDB" id="8AKN">
    <property type="method" value="EM"/>
    <property type="resolution" value="2.30 A"/>
    <property type="chains" value="i=1-142"/>
</dbReference>
<dbReference type="PDB" id="8AM9">
    <property type="method" value="EM"/>
    <property type="resolution" value="2.80 A"/>
    <property type="chains" value="i=1-142"/>
</dbReference>
<dbReference type="PDB" id="8ANA">
    <property type="method" value="EM"/>
    <property type="resolution" value="2.10 A"/>
    <property type="chains" value="i=1-142"/>
</dbReference>
<dbReference type="PDB" id="8AP4">
    <property type="method" value="EM"/>
    <property type="resolution" value="3.00 A"/>
    <property type="chains" value="i=1-142"/>
</dbReference>
<dbReference type="PDB" id="8AYE">
    <property type="method" value="EM"/>
    <property type="resolution" value="1.96 A"/>
    <property type="chains" value="i=1-142"/>
</dbReference>
<dbReference type="PDB" id="8B0X">
    <property type="method" value="EM"/>
    <property type="resolution" value="1.55 A"/>
    <property type="chains" value="i=1-142"/>
</dbReference>
<dbReference type="PDB" id="8B7Y">
    <property type="method" value="EM"/>
    <property type="resolution" value="3.00 A"/>
    <property type="chains" value="R=1-142"/>
</dbReference>
<dbReference type="PDB" id="8BF7">
    <property type="method" value="EM"/>
    <property type="resolution" value="2.33 A"/>
    <property type="chains" value="G=1-142"/>
</dbReference>
<dbReference type="PDB" id="8BGE">
    <property type="method" value="EM"/>
    <property type="resolution" value="2.11 A"/>
    <property type="chains" value="G=1-142"/>
</dbReference>
<dbReference type="PDB" id="8BGH">
    <property type="method" value="EM"/>
    <property type="resolution" value="2.88 A"/>
    <property type="chains" value="G=1-142"/>
</dbReference>
<dbReference type="PDB" id="8BH4">
    <property type="method" value="EM"/>
    <property type="resolution" value="2.62 A"/>
    <property type="chains" value="G=1-142"/>
</dbReference>
<dbReference type="PDB" id="8BHJ">
    <property type="method" value="EM"/>
    <property type="resolution" value="2.81 A"/>
    <property type="chains" value="G=1-142"/>
</dbReference>
<dbReference type="PDB" id="8BHL">
    <property type="method" value="EM"/>
    <property type="resolution" value="2.21 A"/>
    <property type="chains" value="G=1-142"/>
</dbReference>
<dbReference type="PDB" id="8BHN">
    <property type="method" value="EM"/>
    <property type="resolution" value="2.85 A"/>
    <property type="chains" value="G=1-142"/>
</dbReference>
<dbReference type="PDB" id="8BHP">
    <property type="method" value="EM"/>
    <property type="resolution" value="2.37 A"/>
    <property type="chains" value="G=1-142"/>
</dbReference>
<dbReference type="PDB" id="8BIL">
    <property type="method" value="EM"/>
    <property type="resolution" value="2.04 A"/>
    <property type="chains" value="G=1-142"/>
</dbReference>
<dbReference type="PDB" id="8BIM">
    <property type="method" value="EM"/>
    <property type="resolution" value="2.04 A"/>
    <property type="chains" value="G=1-142"/>
</dbReference>
<dbReference type="PDB" id="8C8X">
    <property type="method" value="EM"/>
    <property type="resolution" value="3.93 A"/>
    <property type="chains" value="J=1-142"/>
</dbReference>
<dbReference type="PDB" id="8C8Y">
    <property type="method" value="EM"/>
    <property type="resolution" value="3.03 A"/>
    <property type="chains" value="J=1-142"/>
</dbReference>
<dbReference type="PDB" id="8C8Z">
    <property type="method" value="EM"/>
    <property type="resolution" value="3.12 A"/>
    <property type="chains" value="J=1-142"/>
</dbReference>
<dbReference type="PDB" id="8C90">
    <property type="method" value="EM"/>
    <property type="resolution" value="3.15 A"/>
    <property type="chains" value="J=1-142"/>
</dbReference>
<dbReference type="PDB" id="8C91">
    <property type="method" value="EM"/>
    <property type="resolution" value="4.19 A"/>
    <property type="chains" value="J=1-142"/>
</dbReference>
<dbReference type="PDB" id="8C92">
    <property type="method" value="EM"/>
    <property type="resolution" value="3.79 A"/>
    <property type="chains" value="J=1-142"/>
</dbReference>
<dbReference type="PDB" id="8C93">
    <property type="method" value="EM"/>
    <property type="resolution" value="4.17 A"/>
    <property type="chains" value="J=1-142"/>
</dbReference>
<dbReference type="PDB" id="8C94">
    <property type="method" value="EM"/>
    <property type="resolution" value="3.80 A"/>
    <property type="chains" value="J=1-142"/>
</dbReference>
<dbReference type="PDB" id="8C95">
    <property type="method" value="EM"/>
    <property type="resolution" value="4.92 A"/>
    <property type="chains" value="J=1-142"/>
</dbReference>
<dbReference type="PDB" id="8C96">
    <property type="method" value="EM"/>
    <property type="resolution" value="4.43 A"/>
    <property type="chains" value="J=1-142"/>
</dbReference>
<dbReference type="PDB" id="8C98">
    <property type="method" value="EM"/>
    <property type="resolution" value="3.66 A"/>
    <property type="chains" value="J=1-142"/>
</dbReference>
<dbReference type="PDB" id="8C99">
    <property type="method" value="EM"/>
    <property type="resolution" value="3.29 A"/>
    <property type="chains" value="J=1-142"/>
</dbReference>
<dbReference type="PDB" id="8CAM">
    <property type="method" value="EM"/>
    <property type="resolution" value="1.86 A"/>
    <property type="chains" value="i=1-142"/>
</dbReference>
<dbReference type="PDB" id="8CEU">
    <property type="method" value="EM"/>
    <property type="resolution" value="1.83 A"/>
    <property type="chains" value="i=1-142"/>
</dbReference>
<dbReference type="PDB" id="8CGD">
    <property type="method" value="EM"/>
    <property type="resolution" value="1.98 A"/>
    <property type="chains" value="i=1-142"/>
</dbReference>
<dbReference type="PDB" id="8CGK">
    <property type="method" value="EM"/>
    <property type="resolution" value="1.64 A"/>
    <property type="chains" value="i=1-142"/>
</dbReference>
<dbReference type="PDB" id="8CGV">
    <property type="method" value="EM"/>
    <property type="resolution" value="1.66 A"/>
    <property type="chains" value="i=1-142"/>
</dbReference>
<dbReference type="PDB" id="8E30">
    <property type="method" value="EM"/>
    <property type="resolution" value="1.91 A"/>
    <property type="chains" value="O=1-142"/>
</dbReference>
<dbReference type="PDB" id="8E32">
    <property type="method" value="EM"/>
    <property type="resolution" value="2.35 A"/>
    <property type="chains" value="O=1-142"/>
</dbReference>
<dbReference type="PDB" id="8E33">
    <property type="method" value="EM"/>
    <property type="resolution" value="2.23 A"/>
    <property type="chains" value="O=1-142"/>
</dbReference>
<dbReference type="PDB" id="8E35">
    <property type="method" value="EM"/>
    <property type="resolution" value="2.27 A"/>
    <property type="chains" value="O=1-142"/>
</dbReference>
<dbReference type="PDB" id="8E36">
    <property type="method" value="EM"/>
    <property type="resolution" value="2.38 A"/>
    <property type="chains" value="O=1-142"/>
</dbReference>
<dbReference type="PDB" id="8E3L">
    <property type="method" value="EM"/>
    <property type="resolution" value="2.35 A"/>
    <property type="chains" value="O=1-142"/>
</dbReference>
<dbReference type="PDB" id="8E3M">
    <property type="method" value="EM"/>
    <property type="resolution" value="2.25 A"/>
    <property type="chains" value="O=1-142"/>
</dbReference>
<dbReference type="PDB" id="8E3O">
    <property type="method" value="EM"/>
    <property type="resolution" value="1.99 A"/>
    <property type="chains" value="O=1-142"/>
</dbReference>
<dbReference type="PDB" id="8E41">
    <property type="method" value="EM"/>
    <property type="resolution" value="2.13 A"/>
    <property type="chains" value="O=1-142"/>
</dbReference>
<dbReference type="PDB" id="8E42">
    <property type="method" value="EM"/>
    <property type="resolution" value="2.29 A"/>
    <property type="chains" value="O=1-142"/>
</dbReference>
<dbReference type="PDB" id="8E43">
    <property type="method" value="EM"/>
    <property type="resolution" value="2.09 A"/>
    <property type="chains" value="O=1-142"/>
</dbReference>
<dbReference type="PDB" id="8E44">
    <property type="method" value="EM"/>
    <property type="resolution" value="2.53 A"/>
    <property type="chains" value="O=1-142"/>
</dbReference>
<dbReference type="PDB" id="8E45">
    <property type="method" value="EM"/>
    <property type="resolution" value="2.30 A"/>
    <property type="chains" value="O=1-142"/>
</dbReference>
<dbReference type="PDB" id="8E46">
    <property type="method" value="EM"/>
    <property type="resolution" value="2.32 A"/>
    <property type="chains" value="O=1-142"/>
</dbReference>
<dbReference type="PDB" id="8E47">
    <property type="method" value="EM"/>
    <property type="resolution" value="2.32 A"/>
    <property type="chains" value="O=1-142"/>
</dbReference>
<dbReference type="PDB" id="8E48">
    <property type="method" value="EM"/>
    <property type="resolution" value="2.27 A"/>
    <property type="chains" value="O=1-142"/>
</dbReference>
<dbReference type="PDB" id="8E49">
    <property type="method" value="EM"/>
    <property type="resolution" value="2.05 A"/>
    <property type="chains" value="O=1-142"/>
</dbReference>
<dbReference type="PDB" id="8EIU">
    <property type="method" value="EM"/>
    <property type="resolution" value="2.24 A"/>
    <property type="chains" value="i=1-142"/>
</dbReference>
<dbReference type="PDB" id="8EKC">
    <property type="method" value="EM"/>
    <property type="resolution" value="2.70 A"/>
    <property type="chains" value="L=1-142"/>
</dbReference>
<dbReference type="PDB" id="8EMM">
    <property type="method" value="EM"/>
    <property type="resolution" value="2.10 A"/>
    <property type="chains" value="i=1-142"/>
</dbReference>
<dbReference type="PDB" id="8FIZ">
    <property type="method" value="EM"/>
    <property type="resolution" value="3.80 A"/>
    <property type="chains" value="BR=1-142"/>
</dbReference>
<dbReference type="PDB" id="8FTO">
    <property type="method" value="EM"/>
    <property type="resolution" value="1.85 A"/>
    <property type="chains" value="i=1-142"/>
</dbReference>
<dbReference type="PDB" id="8FZD">
    <property type="method" value="EM"/>
    <property type="resolution" value="3.10 A"/>
    <property type="chains" value="L=1-142"/>
</dbReference>
<dbReference type="PDB" id="8FZE">
    <property type="method" value="EM"/>
    <property type="resolution" value="3.00 A"/>
    <property type="chains" value="L=1-142"/>
</dbReference>
<dbReference type="PDB" id="8FZF">
    <property type="method" value="EM"/>
    <property type="resolution" value="3.20 A"/>
    <property type="chains" value="L=1-142"/>
</dbReference>
<dbReference type="PDB" id="8FZG">
    <property type="method" value="EM"/>
    <property type="resolution" value="3.10 A"/>
    <property type="chains" value="L=1-142"/>
</dbReference>
<dbReference type="PDB" id="8FZH">
    <property type="method" value="EM"/>
    <property type="resolution" value="2.90 A"/>
    <property type="chains" value="L=1-142"/>
</dbReference>
<dbReference type="PDB" id="8FZI">
    <property type="method" value="EM"/>
    <property type="resolution" value="3.10 A"/>
    <property type="chains" value="L=1-142"/>
</dbReference>
<dbReference type="PDB" id="8FZJ">
    <property type="method" value="EM"/>
    <property type="resolution" value="3.00 A"/>
    <property type="chains" value="L=1-142"/>
</dbReference>
<dbReference type="PDB" id="8G2U">
    <property type="method" value="EM"/>
    <property type="resolution" value="3.00 A"/>
    <property type="chains" value="J=1-142"/>
</dbReference>
<dbReference type="PDB" id="8G31">
    <property type="method" value="EM"/>
    <property type="resolution" value="3.20 A"/>
    <property type="chains" value="J=1-142"/>
</dbReference>
<dbReference type="PDB" id="8G34">
    <property type="method" value="EM"/>
    <property type="resolution" value="3.20 A"/>
    <property type="chains" value="J=1-142"/>
</dbReference>
<dbReference type="PDB" id="8G38">
    <property type="method" value="EM"/>
    <property type="resolution" value="3.20 A"/>
    <property type="chains" value="J=1-142"/>
</dbReference>
<dbReference type="PDB" id="8G6W">
    <property type="method" value="EM"/>
    <property type="resolution" value="2.02 A"/>
    <property type="chains" value="i=1-142"/>
</dbReference>
<dbReference type="PDB" id="8G6X">
    <property type="method" value="EM"/>
    <property type="resolution" value="2.31 A"/>
    <property type="chains" value="i=1-142"/>
</dbReference>
<dbReference type="PDB" id="8G6Y">
    <property type="method" value="EM"/>
    <property type="resolution" value="2.09 A"/>
    <property type="chains" value="i=1-142"/>
</dbReference>
<dbReference type="PDB" id="8G7P">
    <property type="method" value="EM"/>
    <property type="resolution" value="2.90 A"/>
    <property type="chains" value="L=1-142"/>
</dbReference>
<dbReference type="PDB" id="8G7Q">
    <property type="method" value="EM"/>
    <property type="resolution" value="3.10 A"/>
    <property type="chains" value="L=1-142"/>
</dbReference>
<dbReference type="PDB" id="8G7R">
    <property type="method" value="EM"/>
    <property type="resolution" value="2.80 A"/>
    <property type="chains" value="L=1-142"/>
</dbReference>
<dbReference type="PDB" id="8G7S">
    <property type="method" value="EM"/>
    <property type="resolution" value="3.10 A"/>
    <property type="chains" value="L=1-142"/>
</dbReference>
<dbReference type="PDB" id="8HSP">
    <property type="method" value="EM"/>
    <property type="resolution" value="2.32 A"/>
    <property type="chains" value="i=1-142"/>
</dbReference>
<dbReference type="PDB" id="8HTZ">
    <property type="method" value="EM"/>
    <property type="resolution" value="2.40 A"/>
    <property type="chains" value="i=1-142"/>
</dbReference>
<dbReference type="PDB" id="8HU1">
    <property type="method" value="EM"/>
    <property type="resolution" value="2.69 A"/>
    <property type="chains" value="i=1-142"/>
</dbReference>
<dbReference type="PDB" id="8IFB">
    <property type="method" value="EM"/>
    <property type="resolution" value="2.43 A"/>
    <property type="chains" value="i=1-142"/>
</dbReference>
<dbReference type="PDB" id="8IFC">
    <property type="method" value="EM"/>
    <property type="resolution" value="2.90 A"/>
    <property type="chains" value="i=1-142"/>
</dbReference>
<dbReference type="PDB" id="8J1Z">
    <property type="method" value="EM"/>
    <property type="resolution" value="2.60 A"/>
    <property type="chains" value="i=1-142"/>
</dbReference>
<dbReference type="PDB" id="8P16">
    <property type="method" value="EM"/>
    <property type="resolution" value="2.77 A"/>
    <property type="chains" value="J=1-142"/>
</dbReference>
<dbReference type="PDB" id="8P17">
    <property type="method" value="EM"/>
    <property type="resolution" value="2.78 A"/>
    <property type="chains" value="J=1-142"/>
</dbReference>
<dbReference type="PDB" id="8P18">
    <property type="method" value="EM"/>
    <property type="resolution" value="2.77 A"/>
    <property type="chains" value="J=1-142"/>
</dbReference>
<dbReference type="PDB" id="8PEG">
    <property type="method" value="EM"/>
    <property type="resolution" value="3.30 A"/>
    <property type="chains" value="m=1-142"/>
</dbReference>
<dbReference type="PDB" id="8PHJ">
    <property type="method" value="EM"/>
    <property type="resolution" value="3.67 A"/>
    <property type="chains" value="i=1-142"/>
</dbReference>
<dbReference type="PDB" id="8PKL">
    <property type="method" value="EM"/>
    <property type="resolution" value="3.09 A"/>
    <property type="chains" value="m=1-142"/>
</dbReference>
<dbReference type="PDB" id="8PVA">
    <property type="method" value="EM"/>
    <property type="resolution" value="4.50 A"/>
    <property type="chains" value="i=1-142"/>
</dbReference>
<dbReference type="PDB" id="8Q4F">
    <property type="method" value="EM"/>
    <property type="resolution" value="3.10 A"/>
    <property type="chains" value="i=1-142"/>
</dbReference>
<dbReference type="PDB" id="8QBT">
    <property type="method" value="EM"/>
    <property type="resolution" value="2.20 A"/>
    <property type="chains" value="J=1-142"/>
</dbReference>
<dbReference type="PDB" id="8QK7">
    <property type="method" value="EM"/>
    <property type="resolution" value="2.77 A"/>
    <property type="chains" value="J=1-142"/>
</dbReference>
<dbReference type="PDB" id="8QOA">
    <property type="method" value="EM"/>
    <property type="resolution" value="2.00 A"/>
    <property type="chains" value="i=1-142"/>
</dbReference>
<dbReference type="PDB" id="8R6C">
    <property type="method" value="EM"/>
    <property type="resolution" value="2.20 A"/>
    <property type="chains" value="i=1-142"/>
</dbReference>
<dbReference type="PDB" id="8R8M">
    <property type="method" value="EM"/>
    <property type="resolution" value="2.40 A"/>
    <property type="chains" value="i=1-142"/>
</dbReference>
<dbReference type="PDB" id="8RPY">
    <property type="method" value="EM"/>
    <property type="resolution" value="2.64 A"/>
    <property type="chains" value="J=1-142"/>
</dbReference>
<dbReference type="PDB" id="8RPZ">
    <property type="method" value="EM"/>
    <property type="resolution" value="2.44 A"/>
    <property type="chains" value="J=1-142"/>
</dbReference>
<dbReference type="PDB" id="8RQ0">
    <property type="method" value="EM"/>
    <property type="resolution" value="2.44 A"/>
    <property type="chains" value="J=1-142"/>
</dbReference>
<dbReference type="PDB" id="8RQ2">
    <property type="method" value="EM"/>
    <property type="resolution" value="2.44 A"/>
    <property type="chains" value="J=1-142"/>
</dbReference>
<dbReference type="PDB" id="8SYL">
    <property type="method" value="EM"/>
    <property type="resolution" value="2.90 A"/>
    <property type="chains" value="L=1-142"/>
</dbReference>
<dbReference type="PDB" id="8T5D">
    <property type="method" value="EM"/>
    <property type="resolution" value="3.20 A"/>
    <property type="chains" value="J=1-142"/>
</dbReference>
<dbReference type="PDB" id="8T5H">
    <property type="method" value="EM"/>
    <property type="resolution" value="3.30 A"/>
    <property type="chains" value="J=1-142"/>
</dbReference>
<dbReference type="PDB" id="8URY">
    <property type="method" value="EM"/>
    <property type="resolution" value="3.10 A"/>
    <property type="chains" value="s=1-142"/>
</dbReference>
<dbReference type="PDB" id="8VS9">
    <property type="method" value="EM"/>
    <property type="resolution" value="3.90 A"/>
    <property type="chains" value="L13=1-142"/>
</dbReference>
<dbReference type="PDB" id="8VSA">
    <property type="method" value="EM"/>
    <property type="resolution" value="3.70 A"/>
    <property type="chains" value="L13=1-142"/>
</dbReference>
<dbReference type="PDB" id="8W51">
    <property type="method" value="EM"/>
    <property type="resolution" value="2.40 A"/>
    <property type="chains" value="K=1-142"/>
</dbReference>
<dbReference type="PDB" id="8YUO">
    <property type="method" value="EM"/>
    <property type="resolution" value="2.25 A"/>
    <property type="chains" value="i=1-142"/>
</dbReference>
<dbReference type="PDB" id="8YUP">
    <property type="method" value="EM"/>
    <property type="resolution" value="2.39 A"/>
    <property type="chains" value="i=1-142"/>
</dbReference>
<dbReference type="PDB" id="8YUQ">
    <property type="method" value="EM"/>
    <property type="resolution" value="2.41 A"/>
    <property type="chains" value="i=1-142"/>
</dbReference>
<dbReference type="PDB" id="8YUR">
    <property type="method" value="EM"/>
    <property type="resolution" value="2.47 A"/>
    <property type="chains" value="i=1-142"/>
</dbReference>
<dbReference type="PDB" id="8YUS">
    <property type="method" value="EM"/>
    <property type="resolution" value="2.43 A"/>
    <property type="chains" value="i=1-142"/>
</dbReference>
<dbReference type="PDB" id="9AX7">
    <property type="method" value="EM"/>
    <property type="resolution" value="2.63 A"/>
    <property type="chains" value="i=1-142"/>
</dbReference>
<dbReference type="PDB" id="9CG5">
    <property type="method" value="EM"/>
    <property type="resolution" value="2.59 A"/>
    <property type="chains" value="i=1-142"/>
</dbReference>
<dbReference type="PDB" id="9CG6">
    <property type="method" value="EM"/>
    <property type="resolution" value="2.61 A"/>
    <property type="chains" value="i=1-142"/>
</dbReference>
<dbReference type="PDB" id="9CG7">
    <property type="method" value="EM"/>
    <property type="resolution" value="2.75 A"/>
    <property type="chains" value="i=1-142"/>
</dbReference>
<dbReference type="PDB" id="9CL9">
    <property type="method" value="EM"/>
    <property type="resolution" value="5.04 A"/>
    <property type="chains" value="J=1-142"/>
</dbReference>
<dbReference type="PDB" id="9D89">
    <property type="method" value="EM"/>
    <property type="resolution" value="1.95 A"/>
    <property type="chains" value="i=1-142"/>
</dbReference>
<dbReference type="PDB" id="9DYG">
    <property type="method" value="EM"/>
    <property type="resolution" value="5.27 A"/>
    <property type="chains" value="J=1-142"/>
</dbReference>
<dbReference type="PDB" id="9FBV">
    <property type="method" value="EM"/>
    <property type="resolution" value="2.40 A"/>
    <property type="chains" value="i=1-142"/>
</dbReference>
<dbReference type="PDB" id="9GFT">
    <property type="method" value="EM"/>
    <property type="resolution" value="3.10 A"/>
    <property type="chains" value="Ae/W=1-142"/>
</dbReference>
<dbReference type="PDB" id="9GGR">
    <property type="method" value="EM"/>
    <property type="resolution" value="3.20 A"/>
    <property type="chains" value="Ae/W=1-142"/>
</dbReference>
<dbReference type="PDB" id="9H3K">
    <property type="method" value="EM"/>
    <property type="resolution" value="6.62 A"/>
    <property type="chains" value="J=1-142"/>
</dbReference>
<dbReference type="PDB" id="9H3L">
    <property type="method" value="EM"/>
    <property type="resolution" value="5.84 A"/>
    <property type="chains" value="J=1-142"/>
</dbReference>
<dbReference type="PDB" id="9H3M">
    <property type="method" value="EM"/>
    <property type="resolution" value="4.41 A"/>
    <property type="chains" value="J=1-142"/>
</dbReference>
<dbReference type="PDB" id="9H3N">
    <property type="method" value="EM"/>
    <property type="resolution" value="3.69 A"/>
    <property type="chains" value="J=1-142"/>
</dbReference>
<dbReference type="PDB" id="9H3O">
    <property type="method" value="EM"/>
    <property type="resolution" value="4.54 A"/>
    <property type="chains" value="J=1-142"/>
</dbReference>
<dbReference type="PDB" id="9H3P">
    <property type="method" value="EM"/>
    <property type="resolution" value="7.06 A"/>
    <property type="chains" value="J=1-142"/>
</dbReference>
<dbReference type="PDB" id="9H3Q">
    <property type="method" value="EM"/>
    <property type="resolution" value="4.02 A"/>
    <property type="chains" value="J=1-142"/>
</dbReference>
<dbReference type="PDB" id="9H3R">
    <property type="method" value="EM"/>
    <property type="resolution" value="4.12 A"/>
    <property type="chains" value="J=1-142"/>
</dbReference>
<dbReference type="PDB" id="9H3S">
    <property type="method" value="EM"/>
    <property type="resolution" value="4.16 A"/>
    <property type="chains" value="J=1-142"/>
</dbReference>
<dbReference type="PDB" id="9H3T">
    <property type="method" value="EM"/>
    <property type="resolution" value="3.85 A"/>
    <property type="chains" value="J=1-142"/>
</dbReference>
<dbReference type="PDB" id="9H3U">
    <property type="method" value="EM"/>
    <property type="resolution" value="3.47 A"/>
    <property type="chains" value="J=1-142"/>
</dbReference>
<dbReference type="PDB" id="9H3V">
    <property type="method" value="EM"/>
    <property type="resolution" value="3.55 A"/>
    <property type="chains" value="J=1-142"/>
</dbReference>
<dbReference type="PDB" id="9H3W">
    <property type="method" value="EM"/>
    <property type="resolution" value="5.38 A"/>
    <property type="chains" value="J=1-142"/>
</dbReference>
<dbReference type="PDB" id="9H3X">
    <property type="method" value="EM"/>
    <property type="resolution" value="4.12 A"/>
    <property type="chains" value="J=1-142"/>
</dbReference>
<dbReference type="PDB" id="9H3Y">
    <property type="method" value="EM"/>
    <property type="resolution" value="3.09 A"/>
    <property type="chains" value="J=1-142"/>
</dbReference>
<dbReference type="PDB" id="9H3Z">
    <property type="method" value="EM"/>
    <property type="resolution" value="2.98 A"/>
    <property type="chains" value="J=1-142"/>
</dbReference>
<dbReference type="PDB" id="9HA1">
    <property type="method" value="EM"/>
    <property type="resolution" value="4.17 A"/>
    <property type="chains" value="J=1-142"/>
</dbReference>
<dbReference type="PDB" id="9HA2">
    <property type="method" value="EM"/>
    <property type="resolution" value="4.17 A"/>
    <property type="chains" value="J=1-142"/>
</dbReference>
<dbReference type="PDB" id="9HA3">
    <property type="method" value="EM"/>
    <property type="resolution" value="3.62 A"/>
    <property type="chains" value="J=1-142"/>
</dbReference>
<dbReference type="PDB" id="9HA4">
    <property type="method" value="EM"/>
    <property type="resolution" value="4.26 A"/>
    <property type="chains" value="J=1-142"/>
</dbReference>
<dbReference type="PDB" id="9HA5">
    <property type="method" value="EM"/>
    <property type="resolution" value="3.30 A"/>
    <property type="chains" value="J=1-142"/>
</dbReference>
<dbReference type="PDB" id="9HA6">
    <property type="method" value="EM"/>
    <property type="resolution" value="3.08 A"/>
    <property type="chains" value="J=1-142"/>
</dbReference>
<dbReference type="PDB" id="9HA7">
    <property type="method" value="EM"/>
    <property type="resolution" value="4.37 A"/>
    <property type="chains" value="J=1-142"/>
</dbReference>
<dbReference type="PDB" id="9HAI">
    <property type="method" value="EM"/>
    <property type="resolution" value="3.01 A"/>
    <property type="chains" value="J=1-142"/>
</dbReference>
<dbReference type="PDB" id="9HAL">
    <property type="method" value="EM"/>
    <property type="resolution" value="4.49 A"/>
    <property type="chains" value="J=1-142"/>
</dbReference>
<dbReference type="PDB" id="9HAM">
    <property type="method" value="EM"/>
    <property type="resolution" value="5.06 A"/>
    <property type="chains" value="J=1-142"/>
</dbReference>
<dbReference type="PDB" id="9MOR">
    <property type="method" value="EM"/>
    <property type="resolution" value="2.65 A"/>
    <property type="chains" value="J=1-142"/>
</dbReference>
<dbReference type="PDB" id="9MQ4">
    <property type="method" value="EM"/>
    <property type="resolution" value="2.78 A"/>
    <property type="chains" value="J=1-142"/>
</dbReference>
<dbReference type="PDBsum" id="1ML5"/>
<dbReference type="PDBsum" id="2J28"/>
<dbReference type="PDBsum" id="2RDO"/>
<dbReference type="PDBsum" id="3BBX"/>
<dbReference type="PDBsum" id="3IY9"/>
<dbReference type="PDBsum" id="3J5L"/>
<dbReference type="PDBsum" id="3J7Z"/>
<dbReference type="PDBsum" id="3J8G"/>
<dbReference type="PDBsum" id="3J9Y"/>
<dbReference type="PDBsum" id="3J9Z"/>
<dbReference type="PDBsum" id="3JA1"/>
<dbReference type="PDBsum" id="3JBU"/>
<dbReference type="PDBsum" id="3JBV"/>
<dbReference type="PDBsum" id="3JCD"/>
<dbReference type="PDBsum" id="3JCE"/>
<dbReference type="PDBsum" id="3JCJ"/>
<dbReference type="PDBsum" id="3JCN"/>
<dbReference type="PDBsum" id="4CSU"/>
<dbReference type="PDBsum" id="4U1U"/>
<dbReference type="PDBsum" id="4U1V"/>
<dbReference type="PDBsum" id="4U20"/>
<dbReference type="PDBsum" id="4U24"/>
<dbReference type="PDBsum" id="4U25"/>
<dbReference type="PDBsum" id="4U26"/>
<dbReference type="PDBsum" id="4U27"/>
<dbReference type="PDBsum" id="4UY8"/>
<dbReference type="PDBsum" id="4V47"/>
<dbReference type="PDBsum" id="4V48"/>
<dbReference type="PDBsum" id="4V4H"/>
<dbReference type="PDBsum" id="4V4Q"/>
<dbReference type="PDBsum" id="4V4V"/>
<dbReference type="PDBsum" id="4V4W"/>
<dbReference type="PDBsum" id="4V50"/>
<dbReference type="PDBsum" id="4V52"/>
<dbReference type="PDBsum" id="4V53"/>
<dbReference type="PDBsum" id="4V54"/>
<dbReference type="PDBsum" id="4V55"/>
<dbReference type="PDBsum" id="4V56"/>
<dbReference type="PDBsum" id="4V57"/>
<dbReference type="PDBsum" id="4V5B"/>
<dbReference type="PDBsum" id="4V5H"/>
<dbReference type="PDBsum" id="4V5Y"/>
<dbReference type="PDBsum" id="4V64"/>
<dbReference type="PDBsum" id="4V65"/>
<dbReference type="PDBsum" id="4V66"/>
<dbReference type="PDBsum" id="4V69"/>
<dbReference type="PDBsum" id="4V6C"/>
<dbReference type="PDBsum" id="4V6D"/>
<dbReference type="PDBsum" id="4V6E"/>
<dbReference type="PDBsum" id="4V6K"/>
<dbReference type="PDBsum" id="4V6L"/>
<dbReference type="PDBsum" id="4V6M"/>
<dbReference type="PDBsum" id="4V6N"/>
<dbReference type="PDBsum" id="4V6O"/>
<dbReference type="PDBsum" id="4V6P"/>
<dbReference type="PDBsum" id="4V6Q"/>
<dbReference type="PDBsum" id="4V6R"/>
<dbReference type="PDBsum" id="4V6S"/>
<dbReference type="PDBsum" id="4V6T"/>
<dbReference type="PDBsum" id="4V6V"/>
<dbReference type="PDBsum" id="4V6Y"/>
<dbReference type="PDBsum" id="4V6Z"/>
<dbReference type="PDBsum" id="4V70"/>
<dbReference type="PDBsum" id="4V71"/>
<dbReference type="PDBsum" id="4V72"/>
<dbReference type="PDBsum" id="4V73"/>
<dbReference type="PDBsum" id="4V74"/>
<dbReference type="PDBsum" id="4V75"/>
<dbReference type="PDBsum" id="4V76"/>
<dbReference type="PDBsum" id="4V77"/>
<dbReference type="PDBsum" id="4V78"/>
<dbReference type="PDBsum" id="4V79"/>
<dbReference type="PDBsum" id="4V7A"/>
<dbReference type="PDBsum" id="4V7B"/>
<dbReference type="PDBsum" id="4V7C"/>
<dbReference type="PDBsum" id="4V7D"/>
<dbReference type="PDBsum" id="4V7I"/>
<dbReference type="PDBsum" id="4V7S"/>
<dbReference type="PDBsum" id="4V7T"/>
<dbReference type="PDBsum" id="4V7U"/>
<dbReference type="PDBsum" id="4V7V"/>
<dbReference type="PDBsum" id="4V85"/>
<dbReference type="PDBsum" id="4V89"/>
<dbReference type="PDBsum" id="4V9C"/>
<dbReference type="PDBsum" id="4V9D"/>
<dbReference type="PDBsum" id="4V9O"/>
<dbReference type="PDBsum" id="4V9P"/>
<dbReference type="PDBsum" id="4WF1"/>
<dbReference type="PDBsum" id="4WOI"/>
<dbReference type="PDBsum" id="4WWW"/>
<dbReference type="PDBsum" id="4YBB"/>
<dbReference type="PDBsum" id="5ADY"/>
<dbReference type="PDBsum" id="5AFI"/>
<dbReference type="PDBsum" id="5AKA"/>
<dbReference type="PDBsum" id="5GAD"/>
<dbReference type="PDBsum" id="5GAE"/>
<dbReference type="PDBsum" id="5GAF"/>
<dbReference type="PDBsum" id="5GAG"/>
<dbReference type="PDBsum" id="5GAH"/>
<dbReference type="PDBsum" id="5H5U"/>
<dbReference type="PDBsum" id="5IQR"/>
<dbReference type="PDBsum" id="5IT8"/>
<dbReference type="PDBsum" id="5J5B"/>
<dbReference type="PDBsum" id="5J7L"/>
<dbReference type="PDBsum" id="5J88"/>
<dbReference type="PDBsum" id="5J8A"/>
<dbReference type="PDBsum" id="5J91"/>
<dbReference type="PDBsum" id="5JC9"/>
<dbReference type="PDBsum" id="5JTE"/>
<dbReference type="PDBsum" id="5JU8"/>
<dbReference type="PDBsum" id="5KCR"/>
<dbReference type="PDBsum" id="5KCS"/>
<dbReference type="PDBsum" id="5KPS"/>
<dbReference type="PDBsum" id="5KPV"/>
<dbReference type="PDBsum" id="5KPW"/>
<dbReference type="PDBsum" id="5KPX"/>
<dbReference type="PDBsum" id="5L3P"/>
<dbReference type="PDBsum" id="5LZA"/>
<dbReference type="PDBsum" id="5LZB"/>
<dbReference type="PDBsum" id="5LZC"/>
<dbReference type="PDBsum" id="5LZD"/>
<dbReference type="PDBsum" id="5LZE"/>
<dbReference type="PDBsum" id="5LZF"/>
<dbReference type="PDBsum" id="5MDV"/>
<dbReference type="PDBsum" id="5MDW"/>
<dbReference type="PDBsum" id="5MDY"/>
<dbReference type="PDBsum" id="5MDZ"/>
<dbReference type="PDBsum" id="5MGP"/>
<dbReference type="PDBsum" id="5NCO"/>
<dbReference type="PDBsum" id="5NP6"/>
<dbReference type="PDBsum" id="5NWY"/>
<dbReference type="PDBsum" id="5O2R"/>
<dbReference type="PDBsum" id="5U4I"/>
<dbReference type="PDBsum" id="5U9F"/>
<dbReference type="PDBsum" id="5U9G"/>
<dbReference type="PDBsum" id="5UYK"/>
<dbReference type="PDBsum" id="5UYL"/>
<dbReference type="PDBsum" id="5UYM"/>
<dbReference type="PDBsum" id="5UYN"/>
<dbReference type="PDBsum" id="5UYP"/>
<dbReference type="PDBsum" id="5UYQ"/>
<dbReference type="PDBsum" id="5WDT"/>
<dbReference type="PDBsum" id="5WE4"/>
<dbReference type="PDBsum" id="5WE6"/>
<dbReference type="PDBsum" id="5WF0"/>
<dbReference type="PDBsum" id="5WFK"/>
<dbReference type="PDBsum" id="5WFS"/>
<dbReference type="PDBsum" id="6BU8"/>
<dbReference type="PDBsum" id="6BY1"/>
<dbReference type="PDBsum" id="6C4I"/>
<dbReference type="PDBsum" id="6DNC"/>
<dbReference type="PDBsum" id="6ENF"/>
<dbReference type="PDBsum" id="6ENJ"/>
<dbReference type="PDBsum" id="6ENU"/>
<dbReference type="PDBsum" id="6GBZ"/>
<dbReference type="PDBsum" id="6GC0"/>
<dbReference type="PDBsum" id="6GC4"/>
<dbReference type="PDBsum" id="6GC6"/>
<dbReference type="PDBsum" id="6GC7"/>
<dbReference type="PDBsum" id="6GC8"/>
<dbReference type="PDBsum" id="6GWT"/>
<dbReference type="PDBsum" id="6GXM"/>
<dbReference type="PDBsum" id="6GXN"/>
<dbReference type="PDBsum" id="6GXO"/>
<dbReference type="PDBsum" id="6GXP"/>
<dbReference type="PDBsum" id="6H4N"/>
<dbReference type="PDBsum" id="6H58"/>
<dbReference type="PDBsum" id="6HRM"/>
<dbReference type="PDBsum" id="6I0Y"/>
<dbReference type="PDBsum" id="6I7V"/>
<dbReference type="PDBsum" id="6O9J"/>
<dbReference type="PDBsum" id="6O9K"/>
<dbReference type="PDBsum" id="6OFX"/>
<dbReference type="PDBsum" id="6OG7"/>
<dbReference type="PDBsum" id="6OGF"/>
<dbReference type="PDBsum" id="6OGG"/>
<dbReference type="PDBsum" id="6OGI"/>
<dbReference type="PDBsum" id="6OM6"/>
<dbReference type="PDBsum" id="6ORE"/>
<dbReference type="PDBsum" id="6ORL"/>
<dbReference type="PDBsum" id="6OSK"/>
<dbReference type="PDBsum" id="6OSQ"/>
<dbReference type="PDBsum" id="6OST"/>
<dbReference type="PDBsum" id="6OT3"/>
<dbReference type="PDBsum" id="6OUO"/>
<dbReference type="PDBsum" id="6PC5"/>
<dbReference type="PDBsum" id="6PC6"/>
<dbReference type="PDBsum" id="6PC7"/>
<dbReference type="PDBsum" id="6PC8"/>
<dbReference type="PDBsum" id="6PCH"/>
<dbReference type="PDBsum" id="6PCQ"/>
<dbReference type="PDBsum" id="6PCR"/>
<dbReference type="PDBsum" id="6PCS"/>
<dbReference type="PDBsum" id="6PCT"/>
<dbReference type="PDBsum" id="6PJ6"/>
<dbReference type="PDBsum" id="6Q98"/>
<dbReference type="PDBsum" id="6Q9A"/>
<dbReference type="PDBsum" id="6QDW"/>
<dbReference type="PDBsum" id="6QUL"/>
<dbReference type="PDBsum" id="6S0K"/>
<dbReference type="PDBsum" id="6SZS"/>
<dbReference type="PDBsum" id="6TBV"/>
<dbReference type="PDBsum" id="6TC3"/>
<dbReference type="PDBsum" id="6U48"/>
<dbReference type="PDBsum" id="6VU3"/>
<dbReference type="PDBsum" id="6VWL"/>
<dbReference type="PDBsum" id="6VWM"/>
<dbReference type="PDBsum" id="6VWN"/>
<dbReference type="PDBsum" id="6VYQ"/>
<dbReference type="PDBsum" id="6VYR"/>
<dbReference type="PDBsum" id="6VYS"/>
<dbReference type="PDBsum" id="6VYT"/>
<dbReference type="PDBsum" id="6VYU"/>
<dbReference type="PDBsum" id="6VYW"/>
<dbReference type="PDBsum" id="6VYX"/>
<dbReference type="PDBsum" id="6VYY"/>
<dbReference type="PDBsum" id="6VYZ"/>
<dbReference type="PDBsum" id="6VZ2"/>
<dbReference type="PDBsum" id="6VZ3"/>
<dbReference type="PDBsum" id="6VZ5"/>
<dbReference type="PDBsum" id="6VZ7"/>
<dbReference type="PDBsum" id="6VZJ"/>
<dbReference type="PDBsum" id="6WD0"/>
<dbReference type="PDBsum" id="6WD1"/>
<dbReference type="PDBsum" id="6WD2"/>
<dbReference type="PDBsum" id="6WD3"/>
<dbReference type="PDBsum" id="6WD4"/>
<dbReference type="PDBsum" id="6WD5"/>
<dbReference type="PDBsum" id="6WD6"/>
<dbReference type="PDBsum" id="6WD7"/>
<dbReference type="PDBsum" id="6WD8"/>
<dbReference type="PDBsum" id="6WD9"/>
<dbReference type="PDBsum" id="6WDA"/>
<dbReference type="PDBsum" id="6WDB"/>
<dbReference type="PDBsum" id="6WDC"/>
<dbReference type="PDBsum" id="6WDD"/>
<dbReference type="PDBsum" id="6WDE"/>
<dbReference type="PDBsum" id="6WDF"/>
<dbReference type="PDBsum" id="6WDG"/>
<dbReference type="PDBsum" id="6WDH"/>
<dbReference type="PDBsum" id="6WDI"/>
<dbReference type="PDBsum" id="6WDJ"/>
<dbReference type="PDBsum" id="6WDK"/>
<dbReference type="PDBsum" id="6WDL"/>
<dbReference type="PDBsum" id="6WDM"/>
<dbReference type="PDBsum" id="6WNT"/>
<dbReference type="PDBsum" id="6WNV"/>
<dbReference type="PDBsum" id="6WNW"/>
<dbReference type="PDBsum" id="6WYV"/>
<dbReference type="PDBsum" id="6X6T"/>
<dbReference type="PDBsum" id="6X7F"/>
<dbReference type="PDBsum" id="6X7K"/>
<dbReference type="PDBsum" id="6X9Q"/>
<dbReference type="PDBsum" id="6XDQ"/>
<dbReference type="PDBsum" id="6XDR"/>
<dbReference type="PDBsum" id="6XGF"/>
<dbReference type="PDBsum" id="6XII"/>
<dbReference type="PDBsum" id="6XIJ"/>
<dbReference type="PDBsum" id="6XZ7"/>
<dbReference type="PDBsum" id="6XZA"/>
<dbReference type="PDBsum" id="6XZB"/>
<dbReference type="PDBsum" id="6Y69"/>
<dbReference type="PDBsum" id="6YS3"/>
<dbReference type="PDBsum" id="6YSR"/>
<dbReference type="PDBsum" id="6YSS"/>
<dbReference type="PDBsum" id="6YST"/>
<dbReference type="PDBsum" id="6YSU"/>
<dbReference type="PDBsum" id="6ZTJ"/>
<dbReference type="PDBsum" id="6ZTL"/>
<dbReference type="PDBsum" id="6ZTM"/>
<dbReference type="PDBsum" id="6ZTN"/>
<dbReference type="PDBsum" id="6ZTO"/>
<dbReference type="PDBsum" id="6ZTP"/>
<dbReference type="PDBsum" id="6ZU1"/>
<dbReference type="PDBsum" id="7ABZ"/>
<dbReference type="PDBsum" id="7AC7"/>
<dbReference type="PDBsum" id="7ACJ"/>
<dbReference type="PDBsum" id="7ACR"/>
<dbReference type="PDBsum" id="7B5K"/>
<dbReference type="PDBsum" id="7BL2"/>
<dbReference type="PDBsum" id="7BL3"/>
<dbReference type="PDBsum" id="7BL4"/>
<dbReference type="PDBsum" id="7BL5"/>
<dbReference type="PDBsum" id="7BL6"/>
<dbReference type="PDBsum" id="7BV8"/>
<dbReference type="PDBsum" id="7D6Z"/>
<dbReference type="PDBsum" id="7D80"/>
<dbReference type="PDBsum" id="7JSS"/>
<dbReference type="PDBsum" id="7JSW"/>
<dbReference type="PDBsum" id="7JSZ"/>
<dbReference type="PDBsum" id="7JT1"/>
<dbReference type="PDBsum" id="7JT2"/>
<dbReference type="PDBsum" id="7JT3"/>
<dbReference type="PDBsum" id="7K00"/>
<dbReference type="PDBsum" id="7K50"/>
<dbReference type="PDBsum" id="7K51"/>
<dbReference type="PDBsum" id="7K52"/>
<dbReference type="PDBsum" id="7K53"/>
<dbReference type="PDBsum" id="7K54"/>
<dbReference type="PDBsum" id="7K55"/>
<dbReference type="PDBsum" id="7LV0"/>
<dbReference type="PDBsum" id="7LVK"/>
<dbReference type="PDBsum" id="7M5D"/>
<dbReference type="PDBsum" id="7N1P"/>
<dbReference type="PDBsum" id="7N2C"/>
<dbReference type="PDBsum" id="7N2U"/>
<dbReference type="PDBsum" id="7N2V"/>
<dbReference type="PDBsum" id="7N30"/>
<dbReference type="PDBsum" id="7N31"/>
<dbReference type="PDBsum" id="7NBU"/>
<dbReference type="PDBsum" id="7NSO"/>
<dbReference type="PDBsum" id="7NSP"/>
<dbReference type="PDBsum" id="7NSQ"/>
<dbReference type="PDBsum" id="7NWT"/>
<dbReference type="PDBsum" id="7NWW"/>
<dbReference type="PDBsum" id="7O19"/>
<dbReference type="PDBsum" id="7O1A"/>
<dbReference type="PDBsum" id="7O1C"/>
<dbReference type="PDBsum" id="7ODE"/>
<dbReference type="PDBsum" id="7OIF"/>
<dbReference type="PDBsum" id="7OIG"/>
<dbReference type="PDBsum" id="7OII"/>
<dbReference type="PDBsum" id="7OIZ"/>
<dbReference type="PDBsum" id="7OJ0"/>
<dbReference type="PDBsum" id="7OT5"/>
<dbReference type="PDBsum" id="7P3K"/>
<dbReference type="PDBsum" id="7PJS"/>
<dbReference type="PDBsum" id="7PJT"/>
<dbReference type="PDBsum" id="7PJU"/>
<dbReference type="PDBsum" id="7PJV"/>
<dbReference type="PDBsum" id="7PJW"/>
<dbReference type="PDBsum" id="7PJX"/>
<dbReference type="PDBsum" id="7PJY"/>
<dbReference type="PDBsum" id="7PJZ"/>
<dbReference type="PDBsum" id="7Q4K"/>
<dbReference type="PDBsum" id="7QG8"/>
<dbReference type="PDBsum" id="7QGH"/>
<dbReference type="PDBsum" id="7QGN"/>
<dbReference type="PDBsum" id="7QGR"/>
<dbReference type="PDBsum" id="7QQ3"/>
<dbReference type="PDBsum" id="7S1G"/>
<dbReference type="PDBsum" id="7S1H"/>
<dbReference type="PDBsum" id="7S1I"/>
<dbReference type="PDBsum" id="7S1J"/>
<dbReference type="PDBsum" id="7S1K"/>
<dbReference type="PDBsum" id="7SA4"/>
<dbReference type="PDBsum" id="7SS9"/>
<dbReference type="PDBsum" id="7SSD"/>
<dbReference type="PDBsum" id="7SSL"/>
<dbReference type="PDBsum" id="7SSN"/>
<dbReference type="PDBsum" id="7SSO"/>
<dbReference type="PDBsum" id="7SSW"/>
<dbReference type="PDBsum" id="7ST2"/>
<dbReference type="PDBsum" id="7ST6"/>
<dbReference type="PDBsum" id="7ST7"/>
<dbReference type="PDBsum" id="7TOS"/>
<dbReference type="PDBsum" id="7UG7"/>
<dbReference type="PDBsum" id="7UPH"/>
<dbReference type="PDBsum" id="7Y7C"/>
<dbReference type="PDBsum" id="7Y7D"/>
<dbReference type="PDBsum" id="7Y7E"/>
<dbReference type="PDBsum" id="7Y7F"/>
<dbReference type="PDBsum" id="7Y7G"/>
<dbReference type="PDBsum" id="7Y7H"/>
<dbReference type="PDBsum" id="7YLA"/>
<dbReference type="PDBsum" id="7Z20"/>
<dbReference type="PDBsum" id="7ZOD"/>
<dbReference type="PDBsum" id="7ZP8"/>
<dbReference type="PDBsum" id="7ZQ5"/>
<dbReference type="PDBsum" id="7ZQ6"/>
<dbReference type="PDBsum" id="7ZTA"/>
<dbReference type="PDBsum" id="8A3L"/>
<dbReference type="PDBsum" id="8AKN"/>
<dbReference type="PDBsum" id="8AM9"/>
<dbReference type="PDBsum" id="8ANA"/>
<dbReference type="PDBsum" id="8AP4"/>
<dbReference type="PDBsum" id="8AYE"/>
<dbReference type="PDBsum" id="8B0X"/>
<dbReference type="PDBsum" id="8B7Y"/>
<dbReference type="PDBsum" id="8BF7"/>
<dbReference type="PDBsum" id="8BGE"/>
<dbReference type="PDBsum" id="8BGH"/>
<dbReference type="PDBsum" id="8BH4"/>
<dbReference type="PDBsum" id="8BHJ"/>
<dbReference type="PDBsum" id="8BHL"/>
<dbReference type="PDBsum" id="8BHN"/>
<dbReference type="PDBsum" id="8BHP"/>
<dbReference type="PDBsum" id="8BIL"/>
<dbReference type="PDBsum" id="8BIM"/>
<dbReference type="PDBsum" id="8C8X"/>
<dbReference type="PDBsum" id="8C8Y"/>
<dbReference type="PDBsum" id="8C8Z"/>
<dbReference type="PDBsum" id="8C90"/>
<dbReference type="PDBsum" id="8C91"/>
<dbReference type="PDBsum" id="8C92"/>
<dbReference type="PDBsum" id="8C93"/>
<dbReference type="PDBsum" id="8C94"/>
<dbReference type="PDBsum" id="8C95"/>
<dbReference type="PDBsum" id="8C96"/>
<dbReference type="PDBsum" id="8C98"/>
<dbReference type="PDBsum" id="8C99"/>
<dbReference type="PDBsum" id="8CAM"/>
<dbReference type="PDBsum" id="8CEU"/>
<dbReference type="PDBsum" id="8CGD"/>
<dbReference type="PDBsum" id="8CGK"/>
<dbReference type="PDBsum" id="8CGV"/>
<dbReference type="PDBsum" id="8E30"/>
<dbReference type="PDBsum" id="8E32"/>
<dbReference type="PDBsum" id="8E33"/>
<dbReference type="PDBsum" id="8E35"/>
<dbReference type="PDBsum" id="8E36"/>
<dbReference type="PDBsum" id="8E3L"/>
<dbReference type="PDBsum" id="8E3M"/>
<dbReference type="PDBsum" id="8E3O"/>
<dbReference type="PDBsum" id="8E41"/>
<dbReference type="PDBsum" id="8E42"/>
<dbReference type="PDBsum" id="8E43"/>
<dbReference type="PDBsum" id="8E44"/>
<dbReference type="PDBsum" id="8E45"/>
<dbReference type="PDBsum" id="8E46"/>
<dbReference type="PDBsum" id="8E47"/>
<dbReference type="PDBsum" id="8E48"/>
<dbReference type="PDBsum" id="8E49"/>
<dbReference type="PDBsum" id="8EIU"/>
<dbReference type="PDBsum" id="8EKC"/>
<dbReference type="PDBsum" id="8EMM"/>
<dbReference type="PDBsum" id="8FIZ"/>
<dbReference type="PDBsum" id="8FTO"/>
<dbReference type="PDBsum" id="8FZD"/>
<dbReference type="PDBsum" id="8FZE"/>
<dbReference type="PDBsum" id="8FZF"/>
<dbReference type="PDBsum" id="8FZG"/>
<dbReference type="PDBsum" id="8FZH"/>
<dbReference type="PDBsum" id="8FZI"/>
<dbReference type="PDBsum" id="8FZJ"/>
<dbReference type="PDBsum" id="8G2U"/>
<dbReference type="PDBsum" id="8G31"/>
<dbReference type="PDBsum" id="8G34"/>
<dbReference type="PDBsum" id="8G38"/>
<dbReference type="PDBsum" id="8G6W"/>
<dbReference type="PDBsum" id="8G6X"/>
<dbReference type="PDBsum" id="8G6Y"/>
<dbReference type="PDBsum" id="8G7P"/>
<dbReference type="PDBsum" id="8G7Q"/>
<dbReference type="PDBsum" id="8G7R"/>
<dbReference type="PDBsum" id="8G7S"/>
<dbReference type="PDBsum" id="8HSP"/>
<dbReference type="PDBsum" id="8HTZ"/>
<dbReference type="PDBsum" id="8HU1"/>
<dbReference type="PDBsum" id="8IFB"/>
<dbReference type="PDBsum" id="8IFC"/>
<dbReference type="PDBsum" id="8J1Z"/>
<dbReference type="PDBsum" id="8P16"/>
<dbReference type="PDBsum" id="8P17"/>
<dbReference type="PDBsum" id="8P18"/>
<dbReference type="PDBsum" id="8PEG"/>
<dbReference type="PDBsum" id="8PHJ"/>
<dbReference type="PDBsum" id="8PKL"/>
<dbReference type="PDBsum" id="8PVA"/>
<dbReference type="PDBsum" id="8Q4F"/>
<dbReference type="PDBsum" id="8QBT"/>
<dbReference type="PDBsum" id="8QK7"/>
<dbReference type="PDBsum" id="8QOA"/>
<dbReference type="PDBsum" id="8R6C"/>
<dbReference type="PDBsum" id="8R8M"/>
<dbReference type="PDBsum" id="8RPY"/>
<dbReference type="PDBsum" id="8RPZ"/>
<dbReference type="PDBsum" id="8RQ0"/>
<dbReference type="PDBsum" id="8RQ2"/>
<dbReference type="PDBsum" id="8SYL"/>
<dbReference type="PDBsum" id="8T5D"/>
<dbReference type="PDBsum" id="8T5H"/>
<dbReference type="PDBsum" id="8URY"/>
<dbReference type="PDBsum" id="8VS9"/>
<dbReference type="PDBsum" id="8VSA"/>
<dbReference type="PDBsum" id="8W51"/>
<dbReference type="PDBsum" id="8YUO"/>
<dbReference type="PDBsum" id="8YUP"/>
<dbReference type="PDBsum" id="8YUQ"/>
<dbReference type="PDBsum" id="8YUR"/>
<dbReference type="PDBsum" id="8YUS"/>
<dbReference type="PDBsum" id="9AX7"/>
<dbReference type="PDBsum" id="9CG5"/>
<dbReference type="PDBsum" id="9CG6"/>
<dbReference type="PDBsum" id="9CG7"/>
<dbReference type="PDBsum" id="9CL9"/>
<dbReference type="PDBsum" id="9D89"/>
<dbReference type="PDBsum" id="9DYG"/>
<dbReference type="PDBsum" id="9FBV"/>
<dbReference type="PDBsum" id="9GFT"/>
<dbReference type="PDBsum" id="9GGR"/>
<dbReference type="PDBsum" id="9H3K"/>
<dbReference type="PDBsum" id="9H3L"/>
<dbReference type="PDBsum" id="9H3M"/>
<dbReference type="PDBsum" id="9H3N"/>
<dbReference type="PDBsum" id="9H3O"/>
<dbReference type="PDBsum" id="9H3P"/>
<dbReference type="PDBsum" id="9H3Q"/>
<dbReference type="PDBsum" id="9H3R"/>
<dbReference type="PDBsum" id="9H3S"/>
<dbReference type="PDBsum" id="9H3T"/>
<dbReference type="PDBsum" id="9H3U"/>
<dbReference type="PDBsum" id="9H3V"/>
<dbReference type="PDBsum" id="9H3W"/>
<dbReference type="PDBsum" id="9H3X"/>
<dbReference type="PDBsum" id="9H3Y"/>
<dbReference type="PDBsum" id="9H3Z"/>
<dbReference type="PDBsum" id="9HA1"/>
<dbReference type="PDBsum" id="9HA2"/>
<dbReference type="PDBsum" id="9HA3"/>
<dbReference type="PDBsum" id="9HA4"/>
<dbReference type="PDBsum" id="9HA5"/>
<dbReference type="PDBsum" id="9HA6"/>
<dbReference type="PDBsum" id="9HA7"/>
<dbReference type="PDBsum" id="9HAI"/>
<dbReference type="PDBsum" id="9HAL"/>
<dbReference type="PDBsum" id="9HAM"/>
<dbReference type="PDBsum" id="9MOR"/>
<dbReference type="PDBsum" id="9MQ4"/>
<dbReference type="EMDB" id="EMD-0076"/>
<dbReference type="EMDB" id="EMD-0080"/>
<dbReference type="EMDB" id="EMD-0081"/>
<dbReference type="EMDB" id="EMD-0082"/>
<dbReference type="EMDB" id="EMD-0083"/>
<dbReference type="EMDB" id="EMD-0137"/>
<dbReference type="EMDB" id="EMD-0139"/>
<dbReference type="EMDB" id="EMD-0261"/>
<dbReference type="EMDB" id="EMD-0322"/>
<dbReference type="EMDB" id="EMD-10073"/>
<dbReference type="EMDB" id="EMD-10353"/>
<dbReference type="EMDB" id="EMD-10453"/>
<dbReference type="EMDB" id="EMD-10458"/>
<dbReference type="EMDB" id="EMD-10655"/>
<dbReference type="EMDB" id="EMD-10656"/>
<dbReference type="EMDB" id="EMD-10657"/>
<dbReference type="EMDB" id="EMD-10705"/>
<dbReference type="EMDB" id="EMD-10905"/>
<dbReference type="EMDB" id="EMD-10906"/>
<dbReference type="EMDB" id="EMD-10907"/>
<dbReference type="EMDB" id="EMD-10908"/>
<dbReference type="EMDB" id="EMD-11418"/>
<dbReference type="EMDB" id="EMD-11419"/>
<dbReference type="EMDB" id="EMD-11420"/>
<dbReference type="EMDB" id="EMD-11421"/>
<dbReference type="EMDB" id="EMD-11422"/>
<dbReference type="EMDB" id="EMD-11423"/>
<dbReference type="EMDB" id="EMD-11426"/>
<dbReference type="EMDB" id="EMD-11710"/>
<dbReference type="EMDB" id="EMD-11713"/>
<dbReference type="EMDB" id="EMD-11717"/>
<dbReference type="EMDB" id="EMD-11718"/>
<dbReference type="EMDB" id="EMD-12035"/>
<dbReference type="EMDB" id="EMD-12215"/>
<dbReference type="EMDB" id="EMD-12216"/>
<dbReference type="EMDB" id="EMD-12217"/>
<dbReference type="EMDB" id="EMD-12218"/>
<dbReference type="EMDB" id="EMD-12219"/>
<dbReference type="EMDB" id="EMD-12261"/>
<dbReference type="EMDB" id="EMD-12573"/>
<dbReference type="EMDB" id="EMD-12574"/>
<dbReference type="EMDB" id="EMD-12575"/>
<dbReference type="EMDB" id="EMD-12635"/>
<dbReference type="EMDB" id="EMD-12636"/>
<dbReference type="EMDB" id="EMD-12693"/>
<dbReference type="EMDB" id="EMD-12694"/>
<dbReference type="EMDB" id="EMD-12695"/>
<dbReference type="EMDB" id="EMD-12826"/>
<dbReference type="EMDB" id="EMD-12928"/>
<dbReference type="EMDB" id="EMD-12929"/>
<dbReference type="EMDB" id="EMD-12930"/>
<dbReference type="EMDB" id="EMD-12936"/>
<dbReference type="EMDB" id="EMD-12937"/>
<dbReference type="EMDB" id="EMD-13055"/>
<dbReference type="EMDB" id="EMD-13180"/>
<dbReference type="EMDB" id="EMD-13458"/>
<dbReference type="EMDB" id="EMD-13459"/>
<dbReference type="EMDB" id="EMD-13461"/>
<dbReference type="EMDB" id="EMD-13462"/>
<dbReference type="EMDB" id="EMD-13463"/>
<dbReference type="EMDB" id="EMD-13464"/>
<dbReference type="EMDB" id="EMD-13465"/>
<dbReference type="EMDB" id="EMD-13805"/>
<dbReference type="EMDB" id="EMD-13952"/>
<dbReference type="EMDB" id="EMD-13955"/>
<dbReference type="EMDB" id="EMD-13956"/>
<dbReference type="EMDB" id="EMD-13958"/>
<dbReference type="EMDB" id="EMD-14121"/>
<dbReference type="EMDB" id="EMD-14454"/>
<dbReference type="EMDB" id="EMD-14846"/>
<dbReference type="EMDB" id="EMD-14850"/>
<dbReference type="EMDB" id="EMD-14864"/>
<dbReference type="EMDB" id="EMD-14865"/>
<dbReference type="EMDB" id="EMD-14956"/>
<dbReference type="EMDB" id="EMD-15116"/>
<dbReference type="EMDB" id="EMD-15558"/>
<dbReference type="EMDB" id="EMD-15712"/>
<dbReference type="EMDB" id="EMD-15793"/>
<dbReference type="EMDB" id="EMD-15905"/>
<dbReference type="EMDB" id="EMD-16015"/>
<dbReference type="EMDB" id="EMD-16029"/>
<dbReference type="EMDB" id="EMD-16031"/>
<dbReference type="EMDB" id="EMD-16047"/>
<dbReference type="EMDB" id="EMD-16057"/>
<dbReference type="EMDB" id="EMD-16059"/>
<dbReference type="EMDB" id="EMD-16062"/>
<dbReference type="EMDB" id="EMD-16065"/>
<dbReference type="EMDB" id="EMD-16081"/>
<dbReference type="EMDB" id="EMD-16082"/>
<dbReference type="EMDB" id="EMD-16494"/>
<dbReference type="EMDB" id="EMD-16495"/>
<dbReference type="EMDB" id="EMD-16496"/>
<dbReference type="EMDB" id="EMD-16497"/>
<dbReference type="EMDB" id="EMD-16498"/>
<dbReference type="EMDB" id="EMD-16499"/>
<dbReference type="EMDB" id="EMD-16500"/>
<dbReference type="EMDB" id="EMD-16501"/>
<dbReference type="EMDB" id="EMD-16502"/>
<dbReference type="EMDB" id="EMD-16503"/>
<dbReference type="EMDB" id="EMD-16505"/>
<dbReference type="EMDB" id="EMD-16506"/>
<dbReference type="EMDB" id="EMD-16530"/>
<dbReference type="EMDB" id="EMD-16613"/>
<dbReference type="EMDB" id="EMD-16641"/>
<dbReference type="EMDB" id="EMD-16646"/>
<dbReference type="EMDB" id="EMD-16652"/>
<dbReference type="EMDB" id="EMD-17346"/>
<dbReference type="EMDB" id="EMD-17347"/>
<dbReference type="EMDB" id="EMD-17348"/>
<dbReference type="EMDB" id="EMD-17631"/>
<dbReference type="EMDB" id="EMD-17667"/>
<dbReference type="EMDB" id="EMD-17743"/>
<dbReference type="EMDB" id="EMD-17959"/>
<dbReference type="EMDB" id="EMD-18145"/>
<dbReference type="EMDB" id="EMD-18320"/>
<dbReference type="EMDB" id="EMD-18458"/>
<dbReference type="EMDB" id="EMD-18534"/>
<dbReference type="EMDB" id="EMD-18950"/>
<dbReference type="EMDB" id="EMD-19004"/>
<dbReference type="EMDB" id="EMD-19426"/>
<dbReference type="EMDB" id="EMD-19427"/>
<dbReference type="EMDB" id="EMD-19428"/>
<dbReference type="EMDB" id="EMD-19429"/>
<dbReference type="EMDB" id="EMD-20048"/>
<dbReference type="EMDB" id="EMD-20052"/>
<dbReference type="EMDB" id="EMD-21420"/>
<dbReference type="EMDB" id="EMD-21421"/>
<dbReference type="EMDB" id="EMD-21422"/>
<dbReference type="EMDB" id="EMD-21625"/>
<dbReference type="EMDB" id="EMD-21630"/>
<dbReference type="EMDB" id="EMD-21631"/>
<dbReference type="EMDB" id="EMD-21632"/>
<dbReference type="EMDB" id="EMD-21633"/>
<dbReference type="EMDB" id="EMD-21634"/>
<dbReference type="EMDB" id="EMD-21635"/>
<dbReference type="EMDB" id="EMD-21636"/>
<dbReference type="EMDB" id="EMD-21637"/>
<dbReference type="EMDB" id="EMD-21638"/>
<dbReference type="EMDB" id="EMD-21639"/>
<dbReference type="EMDB" id="EMD-21640"/>
<dbReference type="EMDB" id="EMD-21641"/>
<dbReference type="EMDB" id="EMD-21856"/>
<dbReference type="EMDB" id="EMD-21857"/>
<dbReference type="EMDB" id="EMD-21858"/>
<dbReference type="EMDB" id="EMD-22459"/>
<dbReference type="EMDB" id="EMD-22461"/>
<dbReference type="EMDB" id="EMD-22464"/>
<dbReference type="EMDB" id="EMD-22466"/>
<dbReference type="EMDB" id="EMD-22469"/>
<dbReference type="EMDB" id="EMD-22472"/>
<dbReference type="EMDB" id="EMD-22669"/>
<dbReference type="EMDB" id="EMD-22670"/>
<dbReference type="EMDB" id="EMD-22671"/>
<dbReference type="EMDB" id="EMD-22672"/>
<dbReference type="EMDB" id="EMD-22673"/>
<dbReference type="EMDB" id="EMD-22674"/>
<dbReference type="EMDB" id="EMD-23528"/>
<dbReference type="EMDB" id="EMD-24120"/>
<dbReference type="EMDB" id="EMD-24132"/>
<dbReference type="EMDB" id="EMD-24133"/>
<dbReference type="EMDB" id="EMD-24134"/>
<dbReference type="EMDB" id="EMD-24135"/>
<dbReference type="EMDB" id="EMD-24136"/>
<dbReference type="EMDB" id="EMD-24803"/>
<dbReference type="EMDB" id="EMD-25405"/>
<dbReference type="EMDB" id="EMD-25407"/>
<dbReference type="EMDB" id="EMD-25409"/>
<dbReference type="EMDB" id="EMD-25410"/>
<dbReference type="EMDB" id="EMD-25411"/>
<dbReference type="EMDB" id="EMD-25415"/>
<dbReference type="EMDB" id="EMD-25418"/>
<dbReference type="EMDB" id="EMD-25420"/>
<dbReference type="EMDB" id="EMD-25421"/>
<dbReference type="EMDB" id="EMD-30215"/>
<dbReference type="EMDB" id="EMD-30598"/>
<dbReference type="EMDB" id="EMD-30611"/>
<dbReference type="EMDB" id="EMD-33660"/>
<dbReference type="EMDB" id="EMD-33661"/>
<dbReference type="EMDB" id="EMD-33662"/>
<dbReference type="EMDB" id="EMD-33663"/>
<dbReference type="EMDB" id="EMD-33664"/>
<dbReference type="EMDB" id="EMD-33665"/>
<dbReference type="EMDB" id="EMD-33904"/>
<dbReference type="EMDB" id="EMD-3489"/>
<dbReference type="EMDB" id="EMD-3490"/>
<dbReference type="EMDB" id="EMD-3492"/>
<dbReference type="EMDB" id="EMD-3493"/>
<dbReference type="EMDB" id="EMD-35001"/>
<dbReference type="EMDB" id="EMD-35020"/>
<dbReference type="EMDB" id="EMD-35022"/>
<dbReference type="EMDB" id="EMD-3508"/>
<dbReference type="EMDB" id="EMD-35411"/>
<dbReference type="EMDB" id="EMD-35412"/>
<dbReference type="EMDB" id="EMD-35939"/>
<dbReference type="EMDB" id="EMD-3617"/>
<dbReference type="EMDB" id="EMD-3713"/>
<dbReference type="EMDB" id="EMD-37271"/>
<dbReference type="EMDB" id="EMD-3730"/>
<dbReference type="EMDB" id="EMD-3898"/>
<dbReference type="EMDB" id="EMD-3899"/>
<dbReference type="EMDB" id="EMD-3903"/>
<dbReference type="EMDB" id="EMD-39577"/>
<dbReference type="EMDB" id="EMD-39578"/>
<dbReference type="EMDB" id="EMD-39579"/>
<dbReference type="EMDB" id="EMD-39580"/>
<dbReference type="EMDB" id="EMD-39581"/>
<dbReference type="EMDB" id="EMD-4001"/>
<dbReference type="EMDB" id="EMD-4121"/>
<dbReference type="EMDB" id="EMD-4122"/>
<dbReference type="EMDB" id="EMD-4123"/>
<dbReference type="EMDB" id="EMD-4124"/>
<dbReference type="EMDB" id="EMD-4125"/>
<dbReference type="EMDB" id="EMD-4126"/>
<dbReference type="EMDB" id="EMD-4378"/>
<dbReference type="EMDB" id="EMD-4379"/>
<dbReference type="EMDB" id="EMD-4380"/>
<dbReference type="EMDB" id="EMD-4381"/>
<dbReference type="EMDB" id="EMD-4382"/>
<dbReference type="EMDB" id="EMD-4383"/>
<dbReference type="EMDB" id="EMD-4477"/>
<dbReference type="EMDB" id="EMD-4478"/>
<dbReference type="EMDB" id="EMD-45666"/>
<dbReference type="EMDB" id="EMD-4638"/>
<dbReference type="EMDB" id="EMD-48479"/>
<dbReference type="EMDB" id="EMD-48513"/>
<dbReference type="EMDB" id="EMD-50296"/>
<dbReference type="EMDB" id="EMD-51318"/>
<dbReference type="EMDB" id="EMD-51340"/>
<dbReference type="EMDB" id="EMD-51828"/>
<dbReference type="EMDB" id="EMD-51829"/>
<dbReference type="EMDB" id="EMD-51830"/>
<dbReference type="EMDB" id="EMD-51831"/>
<dbReference type="EMDB" id="EMD-51832"/>
<dbReference type="EMDB" id="EMD-51833"/>
<dbReference type="EMDB" id="EMD-51834"/>
<dbReference type="EMDB" id="EMD-51835"/>
<dbReference type="EMDB" id="EMD-51836"/>
<dbReference type="EMDB" id="EMD-51837"/>
<dbReference type="EMDB" id="EMD-51838"/>
<dbReference type="EMDB" id="EMD-51839"/>
<dbReference type="EMDB" id="EMD-51840"/>
<dbReference type="EMDB" id="EMD-51841"/>
<dbReference type="EMDB" id="EMD-51842"/>
<dbReference type="EMDB" id="EMD-51843"/>
<dbReference type="EMDB" id="EMD-51973"/>
<dbReference type="EMDB" id="EMD-51974"/>
<dbReference type="EMDB" id="EMD-51975"/>
<dbReference type="EMDB" id="EMD-51976"/>
<dbReference type="EMDB" id="EMD-51977"/>
<dbReference type="EMDB" id="EMD-51978"/>
<dbReference type="EMDB" id="EMD-51979"/>
<dbReference type="EMDB" id="EMD-51981"/>
<dbReference type="EMDB" id="EMD-51982"/>
<dbReference type="EMDB" id="EMD-51983"/>
<dbReference type="EMDB" id="EMD-6667"/>
<dbReference type="EMDB" id="EMD-7289"/>
<dbReference type="EMDB" id="EMD-7341"/>
<dbReference type="EMDB" id="EMD-8000"/>
<dbReference type="EMDB" id="EMD-8001"/>
<dbReference type="EMDB" id="EMD-8002"/>
<dbReference type="EMDB" id="EMD-8003"/>
<dbReference type="EMDB" id="EMD-8004"/>
<dbReference type="EMDB" id="EMD-8107"/>
<dbReference type="EMDB" id="EMD-8175"/>
<dbReference type="EMDB" id="EMD-8176"/>
<dbReference type="EMDB" id="EMD-8237"/>
<dbReference type="EMDB" id="EMD-8238"/>
<dbReference type="EMDB" id="EMD-8279"/>
<dbReference type="EMDB" id="EMD-8280"/>
<dbReference type="EMDB" id="EMD-8281"/>
<dbReference type="EMDB" id="EMD-8282"/>
<dbReference type="EMDB" id="EMD-8505"/>
<dbReference type="EMDB" id="EMD-8615"/>
<dbReference type="EMDB" id="EMD-8616"/>
<dbReference type="EMDB" id="EMD-8617"/>
<dbReference type="EMDB" id="EMD-8618"/>
<dbReference type="EMDB" id="EMD-8619"/>
<dbReference type="EMDB" id="EMD-8620"/>
<dbReference type="EMDB" id="EMD-8813"/>
<dbReference type="EMDB" id="EMD-8814"/>
<dbReference type="EMDB" id="EMD-8815"/>
<dbReference type="EMDB" id="EMD-8828"/>
<dbReference type="SMR" id="P0AA10"/>
<dbReference type="BioGRID" id="4261914">
    <property type="interactions" value="12"/>
</dbReference>
<dbReference type="BioGRID" id="852140">
    <property type="interactions" value="3"/>
</dbReference>
<dbReference type="ComplexPortal" id="CPX-3807">
    <property type="entry name" value="50S large ribosomal subunit"/>
</dbReference>
<dbReference type="DIP" id="DIP-47837N"/>
<dbReference type="FunCoup" id="P0AA10">
    <property type="interactions" value="1228"/>
</dbReference>
<dbReference type="IntAct" id="P0AA10">
    <property type="interactions" value="179"/>
</dbReference>
<dbReference type="STRING" id="511145.b3231"/>
<dbReference type="jPOST" id="P0AA10"/>
<dbReference type="PaxDb" id="511145-b3231"/>
<dbReference type="EnsemblBacteria" id="AAC76263">
    <property type="protein sequence ID" value="AAC76263"/>
    <property type="gene ID" value="b3231"/>
</dbReference>
<dbReference type="GeneID" id="89518067"/>
<dbReference type="GeneID" id="947828"/>
<dbReference type="KEGG" id="ecj:JW3200"/>
<dbReference type="KEGG" id="eco:b3231"/>
<dbReference type="KEGG" id="ecoc:C3026_17580"/>
<dbReference type="PATRIC" id="fig|1411691.4.peg.3497"/>
<dbReference type="EchoBASE" id="EB0867"/>
<dbReference type="eggNOG" id="COG0102">
    <property type="taxonomic scope" value="Bacteria"/>
</dbReference>
<dbReference type="HOGENOM" id="CLU_082184_2_2_6"/>
<dbReference type="InParanoid" id="P0AA10"/>
<dbReference type="OMA" id="HKPIYTP"/>
<dbReference type="OrthoDB" id="9801330at2"/>
<dbReference type="PhylomeDB" id="P0AA10"/>
<dbReference type="BioCyc" id="EcoCyc:EG10874-MONOMER"/>
<dbReference type="BioCyc" id="MetaCyc:EG10874-MONOMER"/>
<dbReference type="EvolutionaryTrace" id="P0AA10"/>
<dbReference type="PRO" id="PR:P0AA10"/>
<dbReference type="Proteomes" id="UP000000625">
    <property type="component" value="Chromosome"/>
</dbReference>
<dbReference type="GO" id="GO:0005737">
    <property type="term" value="C:cytoplasm"/>
    <property type="evidence" value="ECO:0000314"/>
    <property type="project" value="ComplexPortal"/>
</dbReference>
<dbReference type="GO" id="GO:0005829">
    <property type="term" value="C:cytosol"/>
    <property type="evidence" value="ECO:0000314"/>
    <property type="project" value="EcoCyc"/>
</dbReference>
<dbReference type="GO" id="GO:0022625">
    <property type="term" value="C:cytosolic large ribosomal subunit"/>
    <property type="evidence" value="ECO:0000314"/>
    <property type="project" value="EcoCyc"/>
</dbReference>
<dbReference type="GO" id="GO:0005840">
    <property type="term" value="C:ribosome"/>
    <property type="evidence" value="ECO:0000318"/>
    <property type="project" value="GO_Central"/>
</dbReference>
<dbReference type="GO" id="GO:0070180">
    <property type="term" value="F:large ribosomal subunit rRNA binding"/>
    <property type="evidence" value="ECO:0000314"/>
    <property type="project" value="EcoCyc"/>
</dbReference>
<dbReference type="GO" id="GO:0048027">
    <property type="term" value="F:mRNA 5'-UTR binding"/>
    <property type="evidence" value="ECO:0000314"/>
    <property type="project" value="EcoCyc"/>
</dbReference>
<dbReference type="GO" id="GO:0003729">
    <property type="term" value="F:mRNA binding"/>
    <property type="evidence" value="ECO:0000318"/>
    <property type="project" value="GO_Central"/>
</dbReference>
<dbReference type="GO" id="GO:0003735">
    <property type="term" value="F:structural constituent of ribosome"/>
    <property type="evidence" value="ECO:0000318"/>
    <property type="project" value="GO_Central"/>
</dbReference>
<dbReference type="GO" id="GO:0008270">
    <property type="term" value="F:zinc ion binding"/>
    <property type="evidence" value="ECO:0000314"/>
    <property type="project" value="EcoliWiki"/>
</dbReference>
<dbReference type="GO" id="GO:0002181">
    <property type="term" value="P:cytoplasmic translation"/>
    <property type="evidence" value="ECO:0000303"/>
    <property type="project" value="ComplexPortal"/>
</dbReference>
<dbReference type="GO" id="GO:0017148">
    <property type="term" value="P:negative regulation of translation"/>
    <property type="evidence" value="ECO:0000270"/>
    <property type="project" value="EcoCyc"/>
</dbReference>
<dbReference type="CDD" id="cd00392">
    <property type="entry name" value="Ribosomal_L13"/>
    <property type="match status" value="1"/>
</dbReference>
<dbReference type="FunFam" id="3.90.1180.10:FF:000001">
    <property type="entry name" value="50S ribosomal protein L13"/>
    <property type="match status" value="1"/>
</dbReference>
<dbReference type="Gene3D" id="3.90.1180.10">
    <property type="entry name" value="Ribosomal protein L13"/>
    <property type="match status" value="1"/>
</dbReference>
<dbReference type="HAMAP" id="MF_01366">
    <property type="entry name" value="Ribosomal_uL13"/>
    <property type="match status" value="1"/>
</dbReference>
<dbReference type="InterPro" id="IPR005822">
    <property type="entry name" value="Ribosomal_uL13"/>
</dbReference>
<dbReference type="InterPro" id="IPR005823">
    <property type="entry name" value="Ribosomal_uL13_bac-type"/>
</dbReference>
<dbReference type="InterPro" id="IPR023563">
    <property type="entry name" value="Ribosomal_uL13_CS"/>
</dbReference>
<dbReference type="InterPro" id="IPR036899">
    <property type="entry name" value="Ribosomal_uL13_sf"/>
</dbReference>
<dbReference type="NCBIfam" id="TIGR01066">
    <property type="entry name" value="rplM_bact"/>
    <property type="match status" value="1"/>
</dbReference>
<dbReference type="PANTHER" id="PTHR11545:SF2">
    <property type="entry name" value="LARGE RIBOSOMAL SUBUNIT PROTEIN UL13M"/>
    <property type="match status" value="1"/>
</dbReference>
<dbReference type="PANTHER" id="PTHR11545">
    <property type="entry name" value="RIBOSOMAL PROTEIN L13"/>
    <property type="match status" value="1"/>
</dbReference>
<dbReference type="Pfam" id="PF00572">
    <property type="entry name" value="Ribosomal_L13"/>
    <property type="match status" value="1"/>
</dbReference>
<dbReference type="PIRSF" id="PIRSF002181">
    <property type="entry name" value="Ribosomal_L13"/>
    <property type="match status" value="1"/>
</dbReference>
<dbReference type="SUPFAM" id="SSF52161">
    <property type="entry name" value="Ribosomal protein L13"/>
    <property type="match status" value="1"/>
</dbReference>
<dbReference type="PROSITE" id="PS00783">
    <property type="entry name" value="RIBOSOMAL_L13"/>
    <property type="match status" value="1"/>
</dbReference>
<sequence length="142" mass="16019">MKTFTAKPETVKRDWYVVDATGKTLGRLATELARRLRGKHKAEYTPHVDTGDYIIVLNADKVAVTGNKRTDKVYYHHTGHIGGIKQATFEEMIARRPERVIEIAVKGMLPKGPLGRAMFRKLKVYAGNEHNHAAQQPQVLDI</sequence>
<name>RL13_ECOLI</name>
<accession>P0AA10</accession>
<accession>P02410</accession>
<accession>Q2M8Y2</accession>
<protein>
    <recommendedName>
        <fullName evidence="1 12">Large ribosomal subunit protein uL13</fullName>
    </recommendedName>
    <alternativeName>
        <fullName>50S ribosomal protein L13</fullName>
    </alternativeName>
</protein>